<name>RL35_ECOLI</name>
<feature type="initiator methionine" description="Removed" evidence="9 10">
    <location>
        <position position="1"/>
    </location>
</feature>
<feature type="chain" id="PRO_0000177359" description="Large ribosomal subunit protein bL35">
    <location>
        <begin position="2"/>
        <end position="65"/>
    </location>
</feature>
<feature type="region of interest" description="Disordered" evidence="1">
    <location>
        <begin position="1"/>
        <end position="22"/>
    </location>
</feature>
<feature type="compositionally biased region" description="Basic residues" evidence="1">
    <location>
        <begin position="10"/>
        <end position="22"/>
    </location>
</feature>
<feature type="sequence conflict" description="In Ref. 6; AA sequence." evidence="12" ref="6">
    <original>A</original>
    <variation>G</variation>
    <location>
        <position position="11"/>
    </location>
</feature>
<feature type="sequence conflict" description="In Ref. 1; V00291." evidence="12" ref="1">
    <original>A</original>
    <variation>S</variation>
    <location>
        <position position="11"/>
    </location>
</feature>
<feature type="sequence conflict" description="In Ref. 5; AA sequence." evidence="12" ref="5">
    <original>N</original>
    <variation>D</variation>
    <location>
        <position position="28"/>
    </location>
</feature>
<feature type="helix" evidence="17">
    <location>
        <begin position="8"/>
        <end position="11"/>
    </location>
</feature>
<feature type="strand" evidence="16">
    <location>
        <begin position="14"/>
        <end position="16"/>
    </location>
</feature>
<feature type="strand" evidence="13">
    <location>
        <begin position="18"/>
        <end position="20"/>
    </location>
</feature>
<feature type="strand" evidence="17">
    <location>
        <begin position="22"/>
        <end position="24"/>
    </location>
</feature>
<feature type="strand" evidence="14">
    <location>
        <begin position="30"/>
        <end position="32"/>
    </location>
</feature>
<feature type="strand" evidence="15">
    <location>
        <begin position="34"/>
        <end position="36"/>
    </location>
</feature>
<feature type="helix" evidence="17">
    <location>
        <begin position="38"/>
        <end position="44"/>
    </location>
</feature>
<feature type="helix" evidence="17">
    <location>
        <begin position="52"/>
        <end position="61"/>
    </location>
</feature>
<reference key="1">
    <citation type="journal article" date="1982" name="EMBO J.">
        <title>Sequence of a 1.26-kb DNA fragment containing the structural gene for E.coli initiation factor IF3: presence of an AUU initiator codon.</title>
        <authorList>
            <person name="Sacerdot C."/>
            <person name="Fayat G."/>
            <person name="Dessen P."/>
            <person name="Springer M."/>
            <person name="Plumbridge J.A."/>
            <person name="Grunberg-Manago M."/>
            <person name="Blanquet S."/>
        </authorList>
    </citation>
    <scope>NUCLEOTIDE SEQUENCE [GENOMIC DNA]</scope>
</reference>
<reference key="2">
    <citation type="journal article" date="1996" name="DNA Res.">
        <title>A 570-kb DNA sequence of the Escherichia coli K-12 genome corresponding to the 28.0-40.1 min region on the linkage map.</title>
        <authorList>
            <person name="Aiba H."/>
            <person name="Baba T."/>
            <person name="Fujita K."/>
            <person name="Hayashi K."/>
            <person name="Inada T."/>
            <person name="Isono K."/>
            <person name="Itoh T."/>
            <person name="Kasai H."/>
            <person name="Kashimoto K."/>
            <person name="Kimura S."/>
            <person name="Kitakawa M."/>
            <person name="Kitagawa M."/>
            <person name="Makino K."/>
            <person name="Miki T."/>
            <person name="Mizobuchi K."/>
            <person name="Mori H."/>
            <person name="Mori T."/>
            <person name="Motomura K."/>
            <person name="Nakade S."/>
            <person name="Nakamura Y."/>
            <person name="Nashimoto H."/>
            <person name="Nishio Y."/>
            <person name="Oshima T."/>
            <person name="Saito N."/>
            <person name="Sampei G."/>
            <person name="Seki Y."/>
            <person name="Sivasundaram S."/>
            <person name="Tagami H."/>
            <person name="Takeda J."/>
            <person name="Takemoto K."/>
            <person name="Takeuchi Y."/>
            <person name="Wada C."/>
            <person name="Yamamoto Y."/>
            <person name="Horiuchi T."/>
        </authorList>
    </citation>
    <scope>NUCLEOTIDE SEQUENCE [LARGE SCALE GENOMIC DNA]</scope>
    <source>
        <strain>K12 / W3110 / ATCC 27325 / DSM 5911</strain>
    </source>
</reference>
<reference key="3">
    <citation type="journal article" date="1997" name="Science">
        <title>The complete genome sequence of Escherichia coli K-12.</title>
        <authorList>
            <person name="Blattner F.R."/>
            <person name="Plunkett G. III"/>
            <person name="Bloch C.A."/>
            <person name="Perna N.T."/>
            <person name="Burland V."/>
            <person name="Riley M."/>
            <person name="Collado-Vides J."/>
            <person name="Glasner J.D."/>
            <person name="Rode C.K."/>
            <person name="Mayhew G.F."/>
            <person name="Gregor J."/>
            <person name="Davis N.W."/>
            <person name="Kirkpatrick H.A."/>
            <person name="Goeden M.A."/>
            <person name="Rose D.J."/>
            <person name="Mau B."/>
            <person name="Shao Y."/>
        </authorList>
    </citation>
    <scope>NUCLEOTIDE SEQUENCE [LARGE SCALE GENOMIC DNA]</scope>
    <source>
        <strain>K12 / MG1655 / ATCC 47076</strain>
    </source>
</reference>
<reference key="4">
    <citation type="journal article" date="2006" name="Mol. Syst. Biol.">
        <title>Highly accurate genome sequences of Escherichia coli K-12 strains MG1655 and W3110.</title>
        <authorList>
            <person name="Hayashi K."/>
            <person name="Morooka N."/>
            <person name="Yamamoto Y."/>
            <person name="Fujita K."/>
            <person name="Isono K."/>
            <person name="Choi S."/>
            <person name="Ohtsubo E."/>
            <person name="Baba T."/>
            <person name="Wanner B.L."/>
            <person name="Mori H."/>
            <person name="Horiuchi T."/>
        </authorList>
    </citation>
    <scope>NUCLEOTIDE SEQUENCE [LARGE SCALE GENOMIC DNA]</scope>
    <source>
        <strain>K12 / W3110 / ATCC 27325 / DSM 5911</strain>
    </source>
</reference>
<reference key="5">
    <citation type="journal article" date="1987" name="Biochim. Biophys. Acta">
        <title>Nonspecific inhibition of Escherichia coli ornithine decarboxylase by various ribosomal proteins: detection of a new ribosomal protein possessing strong antizyme activity.</title>
        <authorList>
            <person name="Kashiwagi K."/>
            <person name="Igarashi K."/>
        </authorList>
    </citation>
    <scope>PROTEIN SEQUENCE OF 2-42</scope>
    <scope>SUBUNIT</scope>
</reference>
<reference key="6">
    <citation type="journal article" date="1987" name="J. Biochem.">
        <title>Primary structures of and genes for new ribosomal proteins A and B in Escherichia coli.</title>
        <authorList>
            <person name="Wada A."/>
            <person name="Sako T."/>
        </authorList>
    </citation>
    <scope>PROTEIN SEQUENCE OF 2-36</scope>
    <scope>SUBUNIT</scope>
</reference>
<reference key="7">
    <citation type="journal article" date="1999" name="Anal. Biochem.">
        <title>Observation of Escherichia coli ribosomal proteins and their posttranslational modifications by mass spectrometry.</title>
        <authorList>
            <person name="Arnold R.J."/>
            <person name="Reilly J.P."/>
        </authorList>
    </citation>
    <scope>MASS SPECTROMETRY</scope>
    <scope>SUBUNIT</scope>
    <source>
        <strain>K12 / ATCC 25404 / DSM 5698 / NCIMB 11290</strain>
    </source>
</reference>
<reference key="8">
    <citation type="journal article" date="2014" name="Curr. Opin. Struct. Biol.">
        <title>A new system for naming ribosomal proteins.</title>
        <authorList>
            <person name="Ban N."/>
            <person name="Beckmann R."/>
            <person name="Cate J.H.D."/>
            <person name="Dinman J.D."/>
            <person name="Dragon F."/>
            <person name="Ellis S.R."/>
            <person name="Lafontaine D.L.J."/>
            <person name="Lindahl L."/>
            <person name="Liljas A."/>
            <person name="Lipton J.M."/>
            <person name="McAlear M.A."/>
            <person name="Moore P.B."/>
            <person name="Noller H.F."/>
            <person name="Ortega J."/>
            <person name="Panse V.G."/>
            <person name="Ramakrishnan V."/>
            <person name="Spahn C.M.T."/>
            <person name="Steitz T.A."/>
            <person name="Tchorzewski M."/>
            <person name="Tollervey D."/>
            <person name="Warren A.J."/>
            <person name="Williamson J.R."/>
            <person name="Wilson D."/>
            <person name="Yonath A."/>
            <person name="Yusupov M."/>
        </authorList>
    </citation>
    <scope>NOMENCLATURE</scope>
</reference>
<reference key="9">
    <citation type="journal article" date="2005" name="Science">
        <title>Structures of the bacterial ribosome at 3.5 A resolution.</title>
        <authorList>
            <person name="Schuwirth B.S."/>
            <person name="Borovinskaya M.A."/>
            <person name="Hau C.W."/>
            <person name="Zhang W."/>
            <person name="Vila-Sanjurjo A."/>
            <person name="Holton J.M."/>
            <person name="Cate J.H.D."/>
        </authorList>
    </citation>
    <scope>X-RAY CRYSTALLOGRAPHY (3.46 ANGSTROMS) OF 2 DIFFERENT RIBOSOME STRUCTURES</scope>
    <scope>SUBUNIT</scope>
    <source>
        <strain>MRE-600</strain>
    </source>
</reference>
<reference key="10">
    <citation type="journal article" date="2014" name="Cell Rep.">
        <title>Molecular basis for the ribosome functioning as an L-tryptophan sensor.</title>
        <authorList>
            <person name="Bischoff L."/>
            <person name="Berninghausen O."/>
            <person name="Beckmann R."/>
        </authorList>
    </citation>
    <scope>STRUCTURE BY ELECTRON MICROSCOPY (3.80 ANGSTROMS) OF 2-65 IN TNAC-STALLED 50S RIBOSOMAL SUBUNIT</scope>
    <scope>SUBUNIT</scope>
    <source>
        <strain>K12 / A19 / KC6</strain>
    </source>
</reference>
<reference key="11">
    <citation type="journal article" date="2014" name="PLoS Biol.">
        <title>Structural and functional insights into the mode of action of a universally conserved Obg GTPase.</title>
        <authorList>
            <person name="Feng B."/>
            <person name="Mandava C.S."/>
            <person name="Guo Q."/>
            <person name="Wang J."/>
            <person name="Cao W."/>
            <person name="Li N."/>
            <person name="Zhang Y."/>
            <person name="Zhang Y."/>
            <person name="Wang Z."/>
            <person name="Wu J."/>
            <person name="Sanyal S."/>
            <person name="Lei J."/>
            <person name="Gao N."/>
        </authorList>
    </citation>
    <scope>STRUCTURE BY ELECTRON MICROSCOPY (5.5 ANGSTROMS) OF 2-65 OF 50S RIBOSOMAL SUBUNIT IN COMPLEX WITH OBGE AND GMP-PNP</scope>
    <scope>SUBUNIT</scope>
</reference>
<reference key="12">
    <citation type="journal article" date="2017" name="Nature">
        <title>Mechanistic insights into the alternative translation termination by ArfA and RF2.</title>
        <authorList>
            <person name="Ma C."/>
            <person name="Kurita D."/>
            <person name="Li N."/>
            <person name="Chen Y."/>
            <person name="Himeno H."/>
            <person name="Gao N."/>
        </authorList>
    </citation>
    <scope>STRUCTURE BY ELECTRON MICROSCOPY (3.0 ANGSTROMS) OF 70S RIBOSOME IN COMPLEX WITH ARFA AND RF2</scope>
    <scope>SUBUNIT</scope>
</reference>
<reference key="13">
    <citation type="journal article" date="2017" name="Nature">
        <title>Structural basis for ArfA-RF2-mediated translation termination on mRNAs lacking stop codons.</title>
        <authorList>
            <person name="Huter P."/>
            <person name="Mueller C."/>
            <person name="Beckert B."/>
            <person name="Arenz S."/>
            <person name="Berninghausen O."/>
            <person name="Beckmann R."/>
            <person name="Wilson D.N."/>
        </authorList>
    </citation>
    <scope>STRUCTURE BY ELECTRON MICROSCOPY (3.1 ANGSTROMS) OF 70S RIBOSOME IN COMPLEX WITH ARFA AND RF2</scope>
    <scope>SUBUNIT</scope>
</reference>
<reference key="14">
    <citation type="journal article" date="2016" name="Science">
        <title>Translational termination without a stop codon.</title>
        <authorList>
            <person name="James N.R."/>
            <person name="Brown A."/>
            <person name="Gordiyenko Y."/>
            <person name="Ramakrishnan V."/>
        </authorList>
    </citation>
    <scope>STRUCTURE BY ELECTRON MICROSCOPY (2.97 ANGSTROMS) OF 70S RIBOSOME IN COMPLEX WITH ARFA AND RF2</scope>
    <scope>SUBUNIT</scope>
</reference>
<reference key="15">
    <citation type="journal article" date="2017" name="Nature">
        <title>Structural basis of co-translational quality control by ArfA and RF2 bound to ribosome.</title>
        <authorList>
            <person name="Zeng F."/>
            <person name="Chen Y."/>
            <person name="Remis J."/>
            <person name="Shekhar M."/>
            <person name="Phillips J.C."/>
            <person name="Tajkhorshid E."/>
            <person name="Jin H."/>
        </authorList>
    </citation>
    <scope>STRUCTURE BY ELECTRON MICROSCOPY (3.52 ANGSTROMS) OF 70S RIBOSOME IN COMPLEX WITH ARFA AND RF2</scope>
    <scope>SUBUNIT</scope>
</reference>
<keyword id="KW-0002">3D-structure</keyword>
<keyword id="KW-0903">Direct protein sequencing</keyword>
<keyword id="KW-1185">Reference proteome</keyword>
<keyword id="KW-0687">Ribonucleoprotein</keyword>
<keyword id="KW-0689">Ribosomal protein</keyword>
<dbReference type="EMBL" id="V00291">
    <property type="status" value="NOT_ANNOTATED_CDS"/>
    <property type="molecule type" value="Genomic_DNA"/>
</dbReference>
<dbReference type="EMBL" id="U00096">
    <property type="protein sequence ID" value="AAC74787.1"/>
    <property type="molecule type" value="Genomic_DNA"/>
</dbReference>
<dbReference type="EMBL" id="AP009048">
    <property type="protein sequence ID" value="BAA15484.1"/>
    <property type="molecule type" value="Genomic_DNA"/>
</dbReference>
<dbReference type="PIR" id="E64930">
    <property type="entry name" value="R5EC35"/>
</dbReference>
<dbReference type="RefSeq" id="NP_416232.3">
    <property type="nucleotide sequence ID" value="NC_000913.3"/>
</dbReference>
<dbReference type="RefSeq" id="WP_001124225.1">
    <property type="nucleotide sequence ID" value="NZ_STEB01000009.1"/>
</dbReference>
<dbReference type="PDB" id="2J28">
    <property type="method" value="EM"/>
    <property type="resolution" value="8.00 A"/>
    <property type="chains" value="3=2-65"/>
</dbReference>
<dbReference type="PDB" id="2RDO">
    <property type="method" value="EM"/>
    <property type="resolution" value="9.10 A"/>
    <property type="chains" value="3=2-65"/>
</dbReference>
<dbReference type="PDB" id="3BBX">
    <property type="method" value="EM"/>
    <property type="resolution" value="10.00 A"/>
    <property type="chains" value="3=2-65"/>
</dbReference>
<dbReference type="PDB" id="3J5L">
    <property type="method" value="EM"/>
    <property type="resolution" value="6.60 A"/>
    <property type="chains" value="3=2-65"/>
</dbReference>
<dbReference type="PDB" id="3J7Z">
    <property type="method" value="EM"/>
    <property type="resolution" value="3.90 A"/>
    <property type="chains" value="3=1-65"/>
</dbReference>
<dbReference type="PDB" id="3J8G">
    <property type="method" value="EM"/>
    <property type="resolution" value="5.00 A"/>
    <property type="chains" value="7=1-65"/>
</dbReference>
<dbReference type="PDB" id="3J9Y">
    <property type="method" value="EM"/>
    <property type="resolution" value="3.90 A"/>
    <property type="chains" value="3=1-65"/>
</dbReference>
<dbReference type="PDB" id="3J9Z">
    <property type="method" value="EM"/>
    <property type="resolution" value="3.60 A"/>
    <property type="chains" value="L4=2-65"/>
</dbReference>
<dbReference type="PDB" id="3JA1">
    <property type="method" value="EM"/>
    <property type="resolution" value="3.60 A"/>
    <property type="chains" value="L6=2-65"/>
</dbReference>
<dbReference type="PDB" id="3JBU">
    <property type="method" value="EM"/>
    <property type="resolution" value="3.64 A"/>
    <property type="chains" value="7=1-65"/>
</dbReference>
<dbReference type="PDB" id="3JBV">
    <property type="method" value="EM"/>
    <property type="resolution" value="3.32 A"/>
    <property type="chains" value="7=1-65"/>
</dbReference>
<dbReference type="PDB" id="3JCD">
    <property type="method" value="EM"/>
    <property type="resolution" value="3.70 A"/>
    <property type="chains" value="3=2-65"/>
</dbReference>
<dbReference type="PDB" id="3JCE">
    <property type="method" value="EM"/>
    <property type="resolution" value="3.20 A"/>
    <property type="chains" value="3=1-65"/>
</dbReference>
<dbReference type="PDB" id="3JCJ">
    <property type="method" value="EM"/>
    <property type="resolution" value="3.70 A"/>
    <property type="chains" value="c=1-65"/>
</dbReference>
<dbReference type="PDB" id="3JCN">
    <property type="method" value="EM"/>
    <property type="resolution" value="4.60 A"/>
    <property type="chains" value="3=1-65"/>
</dbReference>
<dbReference type="PDB" id="4CSU">
    <property type="method" value="EM"/>
    <property type="resolution" value="5.50 A"/>
    <property type="chains" value="7=2-65"/>
</dbReference>
<dbReference type="PDB" id="4U1U">
    <property type="method" value="X-ray"/>
    <property type="resolution" value="2.95 A"/>
    <property type="chains" value="B3/D3=2-65"/>
</dbReference>
<dbReference type="PDB" id="4U1V">
    <property type="method" value="X-ray"/>
    <property type="resolution" value="3.00 A"/>
    <property type="chains" value="B3/D3=2-65"/>
</dbReference>
<dbReference type="PDB" id="4U20">
    <property type="method" value="X-ray"/>
    <property type="resolution" value="2.90 A"/>
    <property type="chains" value="B3/D3=2-65"/>
</dbReference>
<dbReference type="PDB" id="4U24">
    <property type="method" value="X-ray"/>
    <property type="resolution" value="2.90 A"/>
    <property type="chains" value="B3/D3=2-65"/>
</dbReference>
<dbReference type="PDB" id="4U25">
    <property type="method" value="X-ray"/>
    <property type="resolution" value="2.90 A"/>
    <property type="chains" value="B3/D3=2-65"/>
</dbReference>
<dbReference type="PDB" id="4U26">
    <property type="method" value="X-ray"/>
    <property type="resolution" value="2.80 A"/>
    <property type="chains" value="B3/D3=2-65"/>
</dbReference>
<dbReference type="PDB" id="4U27">
    <property type="method" value="X-ray"/>
    <property type="resolution" value="2.80 A"/>
    <property type="chains" value="B3/D3=2-65"/>
</dbReference>
<dbReference type="PDB" id="4UY8">
    <property type="method" value="EM"/>
    <property type="resolution" value="3.80 A"/>
    <property type="chains" value="3=2-65"/>
</dbReference>
<dbReference type="PDB" id="4V4H">
    <property type="method" value="X-ray"/>
    <property type="resolution" value="3.46 A"/>
    <property type="chains" value="B3/D3=1-65"/>
</dbReference>
<dbReference type="PDB" id="4V4Q">
    <property type="method" value="X-ray"/>
    <property type="resolution" value="3.46 A"/>
    <property type="chains" value="B3/D3=2-65"/>
</dbReference>
<dbReference type="PDB" id="4V50">
    <property type="method" value="X-ray"/>
    <property type="resolution" value="3.22 A"/>
    <property type="chains" value="B3/D3=2-65"/>
</dbReference>
<dbReference type="PDB" id="4V52">
    <property type="method" value="X-ray"/>
    <property type="resolution" value="3.21 A"/>
    <property type="chains" value="B3/D3=2-65"/>
</dbReference>
<dbReference type="PDB" id="4V53">
    <property type="method" value="X-ray"/>
    <property type="resolution" value="3.54 A"/>
    <property type="chains" value="B3/D3=2-65"/>
</dbReference>
<dbReference type="PDB" id="4V54">
    <property type="method" value="X-ray"/>
    <property type="resolution" value="3.30 A"/>
    <property type="chains" value="B3/D3=2-65"/>
</dbReference>
<dbReference type="PDB" id="4V55">
    <property type="method" value="X-ray"/>
    <property type="resolution" value="4.00 A"/>
    <property type="chains" value="B3/D3=2-65"/>
</dbReference>
<dbReference type="PDB" id="4V56">
    <property type="method" value="X-ray"/>
    <property type="resolution" value="3.93 A"/>
    <property type="chains" value="B3/D3=2-65"/>
</dbReference>
<dbReference type="PDB" id="4V57">
    <property type="method" value="X-ray"/>
    <property type="resolution" value="3.50 A"/>
    <property type="chains" value="B3/D3=2-65"/>
</dbReference>
<dbReference type="PDB" id="4V5B">
    <property type="method" value="X-ray"/>
    <property type="resolution" value="3.74 A"/>
    <property type="chains" value="A3/C3=2-65"/>
</dbReference>
<dbReference type="PDB" id="4V5H">
    <property type="method" value="EM"/>
    <property type="resolution" value="5.80 A"/>
    <property type="chains" value="B7=2-65"/>
</dbReference>
<dbReference type="PDB" id="4V5Y">
    <property type="method" value="X-ray"/>
    <property type="resolution" value="4.45 A"/>
    <property type="chains" value="B3/D3=2-65"/>
</dbReference>
<dbReference type="PDB" id="4V64">
    <property type="method" value="X-ray"/>
    <property type="resolution" value="3.50 A"/>
    <property type="chains" value="B3/D3=2-65"/>
</dbReference>
<dbReference type="PDB" id="4V65">
    <property type="method" value="EM"/>
    <property type="resolution" value="9.00 A"/>
    <property type="chains" value="BW=2-65"/>
</dbReference>
<dbReference type="PDB" id="4V66">
    <property type="method" value="EM"/>
    <property type="resolution" value="9.00 A"/>
    <property type="chains" value="BW=2-65"/>
</dbReference>
<dbReference type="PDB" id="4V69">
    <property type="method" value="EM"/>
    <property type="resolution" value="6.70 A"/>
    <property type="chains" value="B3=2-65"/>
</dbReference>
<dbReference type="PDB" id="4V6C">
    <property type="method" value="X-ray"/>
    <property type="resolution" value="3.19 A"/>
    <property type="chains" value="B3/D3=1-65"/>
</dbReference>
<dbReference type="PDB" id="4V6D">
    <property type="method" value="X-ray"/>
    <property type="resolution" value="3.81 A"/>
    <property type="chains" value="B3/D3=1-65"/>
</dbReference>
<dbReference type="PDB" id="4V6E">
    <property type="method" value="X-ray"/>
    <property type="resolution" value="3.71 A"/>
    <property type="chains" value="B3/D3=1-65"/>
</dbReference>
<dbReference type="PDB" id="4V6K">
    <property type="method" value="EM"/>
    <property type="resolution" value="8.25 A"/>
    <property type="chains" value="Af=1-65"/>
</dbReference>
<dbReference type="PDB" id="4V6L">
    <property type="method" value="EM"/>
    <property type="resolution" value="13.20 A"/>
    <property type="chains" value="Bf=1-65"/>
</dbReference>
<dbReference type="PDB" id="4V6M">
    <property type="method" value="EM"/>
    <property type="resolution" value="7.10 A"/>
    <property type="chains" value="B3=2-65"/>
</dbReference>
<dbReference type="PDB" id="4V6N">
    <property type="method" value="EM"/>
    <property type="resolution" value="12.10 A"/>
    <property type="chains" value="A6=2-65"/>
</dbReference>
<dbReference type="PDB" id="4V6O">
    <property type="method" value="EM"/>
    <property type="resolution" value="14.70 A"/>
    <property type="chains" value="B6=2-65"/>
</dbReference>
<dbReference type="PDB" id="4V6P">
    <property type="method" value="EM"/>
    <property type="resolution" value="13.50 A"/>
    <property type="chains" value="B6=2-65"/>
</dbReference>
<dbReference type="PDB" id="4V6Q">
    <property type="method" value="EM"/>
    <property type="resolution" value="11.50 A"/>
    <property type="chains" value="B6=2-65"/>
</dbReference>
<dbReference type="PDB" id="4V6R">
    <property type="method" value="EM"/>
    <property type="resolution" value="11.50 A"/>
    <property type="chains" value="B6=2-65"/>
</dbReference>
<dbReference type="PDB" id="4V6S">
    <property type="method" value="EM"/>
    <property type="resolution" value="13.10 A"/>
    <property type="chains" value="A6=2-65"/>
</dbReference>
<dbReference type="PDB" id="4V6T">
    <property type="method" value="EM"/>
    <property type="resolution" value="8.30 A"/>
    <property type="chains" value="B3=2-65"/>
</dbReference>
<dbReference type="PDB" id="4V6V">
    <property type="method" value="EM"/>
    <property type="resolution" value="9.80 A"/>
    <property type="chains" value="B8=2-65"/>
</dbReference>
<dbReference type="PDB" id="4V6Y">
    <property type="method" value="EM"/>
    <property type="resolution" value="12.00 A"/>
    <property type="chains" value="B3=1-65"/>
</dbReference>
<dbReference type="PDB" id="4V6Z">
    <property type="method" value="EM"/>
    <property type="resolution" value="12.00 A"/>
    <property type="chains" value="B3=1-65"/>
</dbReference>
<dbReference type="PDB" id="4V70">
    <property type="method" value="EM"/>
    <property type="resolution" value="17.00 A"/>
    <property type="chains" value="B3=1-65"/>
</dbReference>
<dbReference type="PDB" id="4V71">
    <property type="method" value="EM"/>
    <property type="resolution" value="20.00 A"/>
    <property type="chains" value="B3=1-65"/>
</dbReference>
<dbReference type="PDB" id="4V72">
    <property type="method" value="EM"/>
    <property type="resolution" value="13.00 A"/>
    <property type="chains" value="B3=1-65"/>
</dbReference>
<dbReference type="PDB" id="4V73">
    <property type="method" value="EM"/>
    <property type="resolution" value="15.00 A"/>
    <property type="chains" value="B3=1-65"/>
</dbReference>
<dbReference type="PDB" id="4V74">
    <property type="method" value="EM"/>
    <property type="resolution" value="17.00 A"/>
    <property type="chains" value="B3=1-65"/>
</dbReference>
<dbReference type="PDB" id="4V75">
    <property type="method" value="EM"/>
    <property type="resolution" value="12.00 A"/>
    <property type="chains" value="B3=1-65"/>
</dbReference>
<dbReference type="PDB" id="4V76">
    <property type="method" value="EM"/>
    <property type="resolution" value="17.00 A"/>
    <property type="chains" value="B3=1-65"/>
</dbReference>
<dbReference type="PDB" id="4V77">
    <property type="method" value="EM"/>
    <property type="resolution" value="17.00 A"/>
    <property type="chains" value="B3=1-65"/>
</dbReference>
<dbReference type="PDB" id="4V78">
    <property type="method" value="EM"/>
    <property type="resolution" value="20.00 A"/>
    <property type="chains" value="B3=1-65"/>
</dbReference>
<dbReference type="PDB" id="4V79">
    <property type="method" value="EM"/>
    <property type="resolution" value="15.00 A"/>
    <property type="chains" value="B3=1-65"/>
</dbReference>
<dbReference type="PDB" id="4V7A">
    <property type="method" value="EM"/>
    <property type="resolution" value="9.00 A"/>
    <property type="chains" value="B3=1-65"/>
</dbReference>
<dbReference type="PDB" id="4V7B">
    <property type="method" value="EM"/>
    <property type="resolution" value="6.80 A"/>
    <property type="chains" value="B3=1-65"/>
</dbReference>
<dbReference type="PDB" id="4V7C">
    <property type="method" value="EM"/>
    <property type="resolution" value="7.60 A"/>
    <property type="chains" value="B6=2-65"/>
</dbReference>
<dbReference type="PDB" id="4V7D">
    <property type="method" value="EM"/>
    <property type="resolution" value="7.60 A"/>
    <property type="chains" value="A7=2-65"/>
</dbReference>
<dbReference type="PDB" id="4V7I">
    <property type="method" value="EM"/>
    <property type="resolution" value="9.60 A"/>
    <property type="chains" value="A3=1-65"/>
</dbReference>
<dbReference type="PDB" id="4V7S">
    <property type="method" value="X-ray"/>
    <property type="resolution" value="3.25 A"/>
    <property type="chains" value="B3/D3=2-65"/>
</dbReference>
<dbReference type="PDB" id="4V7T">
    <property type="method" value="X-ray"/>
    <property type="resolution" value="3.19 A"/>
    <property type="chains" value="B3/D3=2-65"/>
</dbReference>
<dbReference type="PDB" id="4V7U">
    <property type="method" value="X-ray"/>
    <property type="resolution" value="3.10 A"/>
    <property type="chains" value="B3/D3=2-65"/>
</dbReference>
<dbReference type="PDB" id="4V7V">
    <property type="method" value="X-ray"/>
    <property type="resolution" value="3.29 A"/>
    <property type="chains" value="B3/D3=2-65"/>
</dbReference>
<dbReference type="PDB" id="4V85">
    <property type="method" value="X-ray"/>
    <property type="resolution" value="3.20 A"/>
    <property type="chains" value="B7=1-65"/>
</dbReference>
<dbReference type="PDB" id="4V89">
    <property type="method" value="X-ray"/>
    <property type="resolution" value="3.70 A"/>
    <property type="chains" value="B7=1-65"/>
</dbReference>
<dbReference type="PDB" id="4V9C">
    <property type="method" value="X-ray"/>
    <property type="resolution" value="3.30 A"/>
    <property type="chains" value="B3/D3=1-65"/>
</dbReference>
<dbReference type="PDB" id="4V9D">
    <property type="method" value="X-ray"/>
    <property type="resolution" value="3.00 A"/>
    <property type="chains" value="C3/D3=2-65"/>
</dbReference>
<dbReference type="PDB" id="4V9O">
    <property type="method" value="X-ray"/>
    <property type="resolution" value="2.90 A"/>
    <property type="chains" value="A3/C3/E3/G3=1-65"/>
</dbReference>
<dbReference type="PDB" id="4V9P">
    <property type="method" value="X-ray"/>
    <property type="resolution" value="2.90 A"/>
    <property type="chains" value="A3/C3/E3/G3=1-65"/>
</dbReference>
<dbReference type="PDB" id="4WF1">
    <property type="method" value="X-ray"/>
    <property type="resolution" value="3.09 A"/>
    <property type="chains" value="B3/D3=2-65"/>
</dbReference>
<dbReference type="PDB" id="4WOI">
    <property type="method" value="X-ray"/>
    <property type="resolution" value="3.00 A"/>
    <property type="chains" value="B3/C3=1-65"/>
</dbReference>
<dbReference type="PDB" id="4WWW">
    <property type="method" value="X-ray"/>
    <property type="resolution" value="3.10 A"/>
    <property type="chains" value="R3/Y3=2-65"/>
</dbReference>
<dbReference type="PDB" id="4YBB">
    <property type="method" value="X-ray"/>
    <property type="resolution" value="2.10 A"/>
    <property type="chains" value="C4/D4=2-65"/>
</dbReference>
<dbReference type="PDB" id="5ADY">
    <property type="method" value="EM"/>
    <property type="resolution" value="4.50 A"/>
    <property type="chains" value="3=1-65"/>
</dbReference>
<dbReference type="PDB" id="5AFI">
    <property type="method" value="EM"/>
    <property type="resolution" value="2.90 A"/>
    <property type="chains" value="3=1-65"/>
</dbReference>
<dbReference type="PDB" id="5AKA">
    <property type="method" value="EM"/>
    <property type="resolution" value="5.70 A"/>
    <property type="chains" value="3=2-65"/>
</dbReference>
<dbReference type="PDB" id="5GAD">
    <property type="method" value="EM"/>
    <property type="resolution" value="3.70 A"/>
    <property type="chains" value="e=1-65"/>
</dbReference>
<dbReference type="PDB" id="5GAE">
    <property type="method" value="EM"/>
    <property type="resolution" value="3.33 A"/>
    <property type="chains" value="e=1-65"/>
</dbReference>
<dbReference type="PDB" id="5GAF">
    <property type="method" value="EM"/>
    <property type="resolution" value="4.30 A"/>
    <property type="chains" value="e=2-65"/>
</dbReference>
<dbReference type="PDB" id="5GAG">
    <property type="method" value="EM"/>
    <property type="resolution" value="3.80 A"/>
    <property type="chains" value="e=1-65"/>
</dbReference>
<dbReference type="PDB" id="5GAH">
    <property type="method" value="EM"/>
    <property type="resolution" value="3.80 A"/>
    <property type="chains" value="e=1-65"/>
</dbReference>
<dbReference type="PDB" id="5H5U">
    <property type="method" value="EM"/>
    <property type="resolution" value="3.00 A"/>
    <property type="chains" value="e=2-65"/>
</dbReference>
<dbReference type="PDB" id="5IQR">
    <property type="method" value="EM"/>
    <property type="resolution" value="3.00 A"/>
    <property type="chains" value="e=1-65"/>
</dbReference>
<dbReference type="PDB" id="5IT8">
    <property type="method" value="X-ray"/>
    <property type="resolution" value="3.12 A"/>
    <property type="chains" value="C4/D4=2-65"/>
</dbReference>
<dbReference type="PDB" id="5J5B">
    <property type="method" value="X-ray"/>
    <property type="resolution" value="2.80 A"/>
    <property type="chains" value="C4/D4=2-65"/>
</dbReference>
<dbReference type="PDB" id="5J7L">
    <property type="method" value="X-ray"/>
    <property type="resolution" value="3.00 A"/>
    <property type="chains" value="C4/D4=2-65"/>
</dbReference>
<dbReference type="PDB" id="5J88">
    <property type="method" value="X-ray"/>
    <property type="resolution" value="3.32 A"/>
    <property type="chains" value="C4/D4=2-65"/>
</dbReference>
<dbReference type="PDB" id="5J8A">
    <property type="method" value="X-ray"/>
    <property type="resolution" value="3.10 A"/>
    <property type="chains" value="C4/D4=2-65"/>
</dbReference>
<dbReference type="PDB" id="5J91">
    <property type="method" value="X-ray"/>
    <property type="resolution" value="2.96 A"/>
    <property type="chains" value="C4/D4=2-65"/>
</dbReference>
<dbReference type="PDB" id="5JC9">
    <property type="method" value="X-ray"/>
    <property type="resolution" value="3.03 A"/>
    <property type="chains" value="C4/D4=2-65"/>
</dbReference>
<dbReference type="PDB" id="5JTE">
    <property type="method" value="EM"/>
    <property type="resolution" value="3.60 A"/>
    <property type="chains" value="B3=1-65"/>
</dbReference>
<dbReference type="PDB" id="5JU8">
    <property type="method" value="EM"/>
    <property type="resolution" value="3.60 A"/>
    <property type="chains" value="B3=1-65"/>
</dbReference>
<dbReference type="PDB" id="5KCR">
    <property type="method" value="EM"/>
    <property type="resolution" value="3.60 A"/>
    <property type="chains" value="18=1-65"/>
</dbReference>
<dbReference type="PDB" id="5KCS">
    <property type="method" value="EM"/>
    <property type="resolution" value="3.90 A"/>
    <property type="chains" value="18=1-65"/>
</dbReference>
<dbReference type="PDB" id="5KPS">
    <property type="method" value="EM"/>
    <property type="resolution" value="3.90 A"/>
    <property type="chains" value="5=1-65"/>
</dbReference>
<dbReference type="PDB" id="5KPV">
    <property type="method" value="EM"/>
    <property type="resolution" value="4.10 A"/>
    <property type="chains" value="4=1-65"/>
</dbReference>
<dbReference type="PDB" id="5KPW">
    <property type="method" value="EM"/>
    <property type="resolution" value="3.90 A"/>
    <property type="chains" value="4=1-65"/>
</dbReference>
<dbReference type="PDB" id="5KPX">
    <property type="method" value="EM"/>
    <property type="resolution" value="3.90 A"/>
    <property type="chains" value="4=1-65"/>
</dbReference>
<dbReference type="PDB" id="5L3P">
    <property type="method" value="EM"/>
    <property type="resolution" value="3.70 A"/>
    <property type="chains" value="8=1-65"/>
</dbReference>
<dbReference type="PDB" id="5LZA">
    <property type="method" value="EM"/>
    <property type="resolution" value="3.60 A"/>
    <property type="chains" value="3=2-65"/>
</dbReference>
<dbReference type="PDB" id="5LZB">
    <property type="method" value="EM"/>
    <property type="resolution" value="5.30 A"/>
    <property type="chains" value="3=2-65"/>
</dbReference>
<dbReference type="PDB" id="5LZC">
    <property type="method" value="EM"/>
    <property type="resolution" value="4.80 A"/>
    <property type="chains" value="3=2-65"/>
</dbReference>
<dbReference type="PDB" id="5LZD">
    <property type="method" value="EM"/>
    <property type="resolution" value="3.40 A"/>
    <property type="chains" value="3=2-65"/>
</dbReference>
<dbReference type="PDB" id="5LZE">
    <property type="method" value="EM"/>
    <property type="resolution" value="3.50 A"/>
    <property type="chains" value="3=2-65"/>
</dbReference>
<dbReference type="PDB" id="5LZF">
    <property type="method" value="EM"/>
    <property type="resolution" value="4.60 A"/>
    <property type="chains" value="3=2-65"/>
</dbReference>
<dbReference type="PDB" id="5MDV">
    <property type="method" value="EM"/>
    <property type="resolution" value="2.97 A"/>
    <property type="chains" value="e=1-65"/>
</dbReference>
<dbReference type="PDB" id="5MDW">
    <property type="method" value="EM"/>
    <property type="resolution" value="3.06 A"/>
    <property type="chains" value="e=1-65"/>
</dbReference>
<dbReference type="PDB" id="5MDY">
    <property type="method" value="EM"/>
    <property type="resolution" value="3.35 A"/>
    <property type="chains" value="e=1-65"/>
</dbReference>
<dbReference type="PDB" id="5MDZ">
    <property type="method" value="EM"/>
    <property type="resolution" value="3.10 A"/>
    <property type="chains" value="e=1-65"/>
</dbReference>
<dbReference type="PDB" id="5MGP">
    <property type="method" value="EM"/>
    <property type="resolution" value="3.10 A"/>
    <property type="chains" value="3=2-65"/>
</dbReference>
<dbReference type="PDB" id="5NCO">
    <property type="method" value="EM"/>
    <property type="resolution" value="4.80 A"/>
    <property type="chains" value="e=2-65"/>
</dbReference>
<dbReference type="PDB" id="5NP6">
    <property type="method" value="EM"/>
    <property type="resolution" value="3.60 A"/>
    <property type="chains" value="1=2-65"/>
</dbReference>
<dbReference type="PDB" id="5NWY">
    <property type="method" value="EM"/>
    <property type="resolution" value="2.93 A"/>
    <property type="chains" value="q=1-65"/>
</dbReference>
<dbReference type="PDB" id="5O2R">
    <property type="method" value="EM"/>
    <property type="resolution" value="3.40 A"/>
    <property type="chains" value="3=2-65"/>
</dbReference>
<dbReference type="PDB" id="5U4I">
    <property type="method" value="EM"/>
    <property type="resolution" value="3.50 A"/>
    <property type="chains" value="4=1-65"/>
</dbReference>
<dbReference type="PDB" id="5U9F">
    <property type="method" value="EM"/>
    <property type="resolution" value="3.20 A"/>
    <property type="chains" value="33=1-65"/>
</dbReference>
<dbReference type="PDB" id="5U9G">
    <property type="method" value="EM"/>
    <property type="resolution" value="3.20 A"/>
    <property type="chains" value="33=1-65"/>
</dbReference>
<dbReference type="PDB" id="5UYK">
    <property type="method" value="EM"/>
    <property type="resolution" value="3.90 A"/>
    <property type="chains" value="33=2-65"/>
</dbReference>
<dbReference type="PDB" id="5UYL">
    <property type="method" value="EM"/>
    <property type="resolution" value="3.60 A"/>
    <property type="chains" value="33=2-65"/>
</dbReference>
<dbReference type="PDB" id="5UYM">
    <property type="method" value="EM"/>
    <property type="resolution" value="3.20 A"/>
    <property type="chains" value="33=2-65"/>
</dbReference>
<dbReference type="PDB" id="5UYN">
    <property type="method" value="EM"/>
    <property type="resolution" value="4.00 A"/>
    <property type="chains" value="33=2-65"/>
</dbReference>
<dbReference type="PDB" id="5UYP">
    <property type="method" value="EM"/>
    <property type="resolution" value="3.90 A"/>
    <property type="chains" value="33=2-65"/>
</dbReference>
<dbReference type="PDB" id="5UYQ">
    <property type="method" value="EM"/>
    <property type="resolution" value="3.80 A"/>
    <property type="chains" value="33=2-65"/>
</dbReference>
<dbReference type="PDB" id="5WDT">
    <property type="method" value="EM"/>
    <property type="resolution" value="3.00 A"/>
    <property type="chains" value="3=2-65"/>
</dbReference>
<dbReference type="PDB" id="5WE4">
    <property type="method" value="EM"/>
    <property type="resolution" value="3.10 A"/>
    <property type="chains" value="3=2-65"/>
</dbReference>
<dbReference type="PDB" id="5WE6">
    <property type="method" value="EM"/>
    <property type="resolution" value="3.40 A"/>
    <property type="chains" value="3=2-65"/>
</dbReference>
<dbReference type="PDB" id="5WF0">
    <property type="method" value="EM"/>
    <property type="resolution" value="3.60 A"/>
    <property type="chains" value="3=2-65"/>
</dbReference>
<dbReference type="PDB" id="5WFK">
    <property type="method" value="EM"/>
    <property type="resolution" value="3.40 A"/>
    <property type="chains" value="3=2-65"/>
</dbReference>
<dbReference type="PDB" id="5WFS">
    <property type="method" value="EM"/>
    <property type="resolution" value="3.00 A"/>
    <property type="chains" value="3=2-65"/>
</dbReference>
<dbReference type="PDB" id="6BU8">
    <property type="method" value="EM"/>
    <property type="resolution" value="3.50 A"/>
    <property type="chains" value="33=2-65"/>
</dbReference>
<dbReference type="PDB" id="6BY1">
    <property type="method" value="X-ray"/>
    <property type="resolution" value="3.94 A"/>
    <property type="chains" value="C4/D4=2-63"/>
</dbReference>
<dbReference type="PDB" id="6C4I">
    <property type="method" value="EM"/>
    <property type="resolution" value="3.24 A"/>
    <property type="chains" value="5=1-65"/>
</dbReference>
<dbReference type="PDB" id="6DNC">
    <property type="method" value="EM"/>
    <property type="resolution" value="3.70 A"/>
    <property type="chains" value="IA=1-65"/>
</dbReference>
<dbReference type="PDB" id="6ENF">
    <property type="method" value="EM"/>
    <property type="resolution" value="3.20 A"/>
    <property type="chains" value="3=2-65"/>
</dbReference>
<dbReference type="PDB" id="6ENJ">
    <property type="method" value="EM"/>
    <property type="resolution" value="3.70 A"/>
    <property type="chains" value="3=2-65"/>
</dbReference>
<dbReference type="PDB" id="6ENU">
    <property type="method" value="EM"/>
    <property type="resolution" value="3.10 A"/>
    <property type="chains" value="3=2-65"/>
</dbReference>
<dbReference type="PDB" id="6GBZ">
    <property type="method" value="EM"/>
    <property type="resolution" value="3.80 A"/>
    <property type="chains" value="3=2-65"/>
</dbReference>
<dbReference type="PDB" id="6GC0">
    <property type="method" value="EM"/>
    <property type="resolution" value="3.80 A"/>
    <property type="chains" value="3=2-65"/>
</dbReference>
<dbReference type="PDB" id="6GC8">
    <property type="method" value="EM"/>
    <property type="resolution" value="3.80 A"/>
    <property type="chains" value="3=2-65"/>
</dbReference>
<dbReference type="PDB" id="6GWT">
    <property type="method" value="EM"/>
    <property type="resolution" value="3.80 A"/>
    <property type="chains" value="3=2-65"/>
</dbReference>
<dbReference type="PDB" id="6GXM">
    <property type="method" value="EM"/>
    <property type="resolution" value="3.80 A"/>
    <property type="chains" value="3=2-65"/>
</dbReference>
<dbReference type="PDB" id="6GXN">
    <property type="method" value="EM"/>
    <property type="resolution" value="3.90 A"/>
    <property type="chains" value="3=2-65"/>
</dbReference>
<dbReference type="PDB" id="6GXO">
    <property type="method" value="EM"/>
    <property type="resolution" value="3.90 A"/>
    <property type="chains" value="3=2-65"/>
</dbReference>
<dbReference type="PDB" id="6GXP">
    <property type="method" value="EM"/>
    <property type="resolution" value="4.40 A"/>
    <property type="chains" value="3=2-65"/>
</dbReference>
<dbReference type="PDB" id="6H4N">
    <property type="method" value="EM"/>
    <property type="resolution" value="3.00 A"/>
    <property type="chains" value="3=2-65"/>
</dbReference>
<dbReference type="PDB" id="6H58">
    <property type="method" value="EM"/>
    <property type="resolution" value="7.90 A"/>
    <property type="chains" value="3/33=2-65"/>
</dbReference>
<dbReference type="PDB" id="6HRM">
    <property type="method" value="EM"/>
    <property type="resolution" value="2.96 A"/>
    <property type="chains" value="e=2-65"/>
</dbReference>
<dbReference type="PDB" id="6I0Y">
    <property type="method" value="EM"/>
    <property type="resolution" value="3.20 A"/>
    <property type="chains" value="3=1-65"/>
</dbReference>
<dbReference type="PDB" id="6I7V">
    <property type="method" value="X-ray"/>
    <property type="resolution" value="2.90 A"/>
    <property type="chains" value="C4/D4=2-65"/>
</dbReference>
<dbReference type="PDB" id="6O9J">
    <property type="method" value="EM"/>
    <property type="resolution" value="3.90 A"/>
    <property type="chains" value="4=2-65"/>
</dbReference>
<dbReference type="PDB" id="6O9K">
    <property type="method" value="EM"/>
    <property type="resolution" value="4.00 A"/>
    <property type="chains" value="8=2-65"/>
</dbReference>
<dbReference type="PDB" id="6OFX">
    <property type="method" value="EM"/>
    <property type="resolution" value="3.30 A"/>
    <property type="chains" value="E=2-65"/>
</dbReference>
<dbReference type="PDB" id="6OG7">
    <property type="method" value="EM"/>
    <property type="resolution" value="3.30 A"/>
    <property type="chains" value="E=2-65"/>
</dbReference>
<dbReference type="PDB" id="6OGF">
    <property type="method" value="EM"/>
    <property type="resolution" value="3.90 A"/>
    <property type="chains" value="E=1-65"/>
</dbReference>
<dbReference type="PDB" id="6OGG">
    <property type="method" value="EM"/>
    <property type="resolution" value="4.20 A"/>
    <property type="chains" value="E=1-65"/>
</dbReference>
<dbReference type="PDB" id="6OGI">
    <property type="method" value="EM"/>
    <property type="resolution" value="3.40 A"/>
    <property type="chains" value="E=1-65"/>
</dbReference>
<dbReference type="PDB" id="6OM6">
    <property type="method" value="EM"/>
    <property type="resolution" value="3.10 A"/>
    <property type="chains" value="e=1-65"/>
</dbReference>
<dbReference type="PDB" id="6ORE">
    <property type="method" value="EM"/>
    <property type="resolution" value="2.90 A"/>
    <property type="chains" value="e=2-65"/>
</dbReference>
<dbReference type="PDB" id="6ORL">
    <property type="method" value="EM"/>
    <property type="resolution" value="3.50 A"/>
    <property type="chains" value="e=2-65"/>
</dbReference>
<dbReference type="PDB" id="6OSK">
    <property type="method" value="EM"/>
    <property type="resolution" value="3.60 A"/>
    <property type="chains" value="e=2-65"/>
</dbReference>
<dbReference type="PDB" id="6OSQ">
    <property type="method" value="EM"/>
    <property type="resolution" value="3.50 A"/>
    <property type="chains" value="e=2-65"/>
</dbReference>
<dbReference type="PDB" id="6OST">
    <property type="method" value="EM"/>
    <property type="resolution" value="4.20 A"/>
    <property type="chains" value="e=2-65"/>
</dbReference>
<dbReference type="PDB" id="6OT3">
    <property type="method" value="EM"/>
    <property type="resolution" value="3.90 A"/>
    <property type="chains" value="e=2-65"/>
</dbReference>
<dbReference type="PDB" id="6OUO">
    <property type="method" value="EM"/>
    <property type="resolution" value="3.70 A"/>
    <property type="chains" value="e=2-65"/>
</dbReference>
<dbReference type="PDB" id="6PJ6">
    <property type="method" value="EM"/>
    <property type="resolution" value="2.20 A"/>
    <property type="chains" value="l=2-65"/>
</dbReference>
<dbReference type="PDB" id="6Q97">
    <property type="method" value="EM"/>
    <property type="resolution" value="3.90 A"/>
    <property type="chains" value="e=2-65"/>
</dbReference>
<dbReference type="PDB" id="6Q98">
    <property type="method" value="EM"/>
    <property type="resolution" value="4.30 A"/>
    <property type="chains" value="e=1-65"/>
</dbReference>
<dbReference type="PDB" id="6Q9A">
    <property type="method" value="EM"/>
    <property type="resolution" value="3.70 A"/>
    <property type="chains" value="e=2-65"/>
</dbReference>
<dbReference type="PDB" id="6QDW">
    <property type="method" value="EM"/>
    <property type="resolution" value="2.83 A"/>
    <property type="chains" value="7=1-65"/>
</dbReference>
<dbReference type="PDB" id="6QUL">
    <property type="method" value="EM"/>
    <property type="resolution" value="3.00 A"/>
    <property type="chains" value="e=1-65"/>
</dbReference>
<dbReference type="PDB" id="6S0K">
    <property type="method" value="EM"/>
    <property type="resolution" value="3.10 A"/>
    <property type="chains" value="e=1-65"/>
</dbReference>
<dbReference type="PDB" id="6SZS">
    <property type="method" value="EM"/>
    <property type="resolution" value="3.06 A"/>
    <property type="chains" value="3=1-65"/>
</dbReference>
<dbReference type="PDB" id="6TBV">
    <property type="method" value="EM"/>
    <property type="resolution" value="2.70 A"/>
    <property type="chains" value="L351=1-65"/>
</dbReference>
<dbReference type="PDB" id="6TC3">
    <property type="method" value="EM"/>
    <property type="resolution" value="2.70 A"/>
    <property type="chains" value="L351=1-65"/>
</dbReference>
<dbReference type="PDB" id="6U48">
    <property type="method" value="EM"/>
    <property type="resolution" value="2.87 A"/>
    <property type="chains" value="C4=2-65"/>
</dbReference>
<dbReference type="PDB" id="6VU3">
    <property type="method" value="EM"/>
    <property type="resolution" value="3.70 A"/>
    <property type="chains" value="o=2-65"/>
</dbReference>
<dbReference type="PDB" id="6VWL">
    <property type="method" value="EM"/>
    <property type="resolution" value="3.10 A"/>
    <property type="chains" value="AB=1-65"/>
</dbReference>
<dbReference type="PDB" id="6VWM">
    <property type="method" value="EM"/>
    <property type="resolution" value="3.40 A"/>
    <property type="chains" value="AB=1-65"/>
</dbReference>
<dbReference type="PDB" id="6VWN">
    <property type="method" value="EM"/>
    <property type="resolution" value="3.40 A"/>
    <property type="chains" value="AB=1-65"/>
</dbReference>
<dbReference type="PDB" id="6VYQ">
    <property type="method" value="EM"/>
    <property type="resolution" value="3.70 A"/>
    <property type="chains" value="o=1-65"/>
</dbReference>
<dbReference type="PDB" id="6VYR">
    <property type="method" value="EM"/>
    <property type="resolution" value="3.80 A"/>
    <property type="chains" value="o=1-65"/>
</dbReference>
<dbReference type="PDB" id="6VYS">
    <property type="method" value="EM"/>
    <property type="resolution" value="3.70 A"/>
    <property type="chains" value="o=1-65"/>
</dbReference>
<dbReference type="PDB" id="6VYT">
    <property type="method" value="EM"/>
    <property type="resolution" value="14.00 A"/>
    <property type="chains" value="o=1-65"/>
</dbReference>
<dbReference type="PDB" id="6VYU">
    <property type="method" value="EM"/>
    <property type="resolution" value="7.00 A"/>
    <property type="chains" value="o=1-65"/>
</dbReference>
<dbReference type="PDB" id="6VYW">
    <property type="method" value="EM"/>
    <property type="resolution" value="7.00 A"/>
    <property type="chains" value="o=1-65"/>
</dbReference>
<dbReference type="PDB" id="6VYX">
    <property type="method" value="EM"/>
    <property type="resolution" value="9.90 A"/>
    <property type="chains" value="o=1-65"/>
</dbReference>
<dbReference type="PDB" id="6VYY">
    <property type="method" value="EM"/>
    <property type="resolution" value="9.90 A"/>
    <property type="chains" value="o=1-65"/>
</dbReference>
<dbReference type="PDB" id="6VYZ">
    <property type="method" value="EM"/>
    <property type="resolution" value="9.90 A"/>
    <property type="chains" value="o=1-65"/>
</dbReference>
<dbReference type="PDB" id="6VZ2">
    <property type="method" value="EM"/>
    <property type="resolution" value="10.00 A"/>
    <property type="chains" value="o=2-65"/>
</dbReference>
<dbReference type="PDB" id="6VZ3">
    <property type="method" value="EM"/>
    <property type="resolution" value="8.90 A"/>
    <property type="chains" value="o=2-65"/>
</dbReference>
<dbReference type="PDB" id="6VZ5">
    <property type="method" value="EM"/>
    <property type="resolution" value="8.90 A"/>
    <property type="chains" value="o=1-65"/>
</dbReference>
<dbReference type="PDB" id="6VZ7">
    <property type="method" value="EM"/>
    <property type="resolution" value="7.00 A"/>
    <property type="chains" value="o=2-65"/>
</dbReference>
<dbReference type="PDB" id="6VZJ">
    <property type="method" value="EM"/>
    <property type="resolution" value="4.10 A"/>
    <property type="chains" value="o=2-65"/>
</dbReference>
<dbReference type="PDB" id="6WD0">
    <property type="method" value="EM"/>
    <property type="resolution" value="3.00 A"/>
    <property type="chains" value="E=2-65"/>
</dbReference>
<dbReference type="PDB" id="6WD1">
    <property type="method" value="EM"/>
    <property type="resolution" value="3.30 A"/>
    <property type="chains" value="E=2-65"/>
</dbReference>
<dbReference type="PDB" id="6WD2">
    <property type="method" value="EM"/>
    <property type="resolution" value="3.60 A"/>
    <property type="chains" value="E=2-65"/>
</dbReference>
<dbReference type="PDB" id="6WD3">
    <property type="method" value="EM"/>
    <property type="resolution" value="3.60 A"/>
    <property type="chains" value="E=2-65"/>
</dbReference>
<dbReference type="PDB" id="6WD4">
    <property type="method" value="EM"/>
    <property type="resolution" value="3.70 A"/>
    <property type="chains" value="E=2-65"/>
</dbReference>
<dbReference type="PDB" id="6WD5">
    <property type="method" value="EM"/>
    <property type="resolution" value="3.60 A"/>
    <property type="chains" value="E=2-65"/>
</dbReference>
<dbReference type="PDB" id="6WD6">
    <property type="method" value="EM"/>
    <property type="resolution" value="3.70 A"/>
    <property type="chains" value="E=2-65"/>
</dbReference>
<dbReference type="PDB" id="6WD7">
    <property type="method" value="EM"/>
    <property type="resolution" value="3.90 A"/>
    <property type="chains" value="E=2-65"/>
</dbReference>
<dbReference type="PDB" id="6WD8">
    <property type="method" value="EM"/>
    <property type="resolution" value="3.70 A"/>
    <property type="chains" value="E=2-65"/>
</dbReference>
<dbReference type="PDB" id="6WD9">
    <property type="method" value="EM"/>
    <property type="resolution" value="3.70 A"/>
    <property type="chains" value="E=2-65"/>
</dbReference>
<dbReference type="PDB" id="6WDA">
    <property type="method" value="EM"/>
    <property type="resolution" value="3.80 A"/>
    <property type="chains" value="E=2-65"/>
</dbReference>
<dbReference type="PDB" id="6WDB">
    <property type="method" value="EM"/>
    <property type="resolution" value="4.00 A"/>
    <property type="chains" value="E=2-65"/>
</dbReference>
<dbReference type="PDB" id="6WDC">
    <property type="method" value="EM"/>
    <property type="resolution" value="4.20 A"/>
    <property type="chains" value="E=2-65"/>
</dbReference>
<dbReference type="PDB" id="6WDD">
    <property type="method" value="EM"/>
    <property type="resolution" value="3.20 A"/>
    <property type="chains" value="E=2-65"/>
</dbReference>
<dbReference type="PDB" id="6WDE">
    <property type="method" value="EM"/>
    <property type="resolution" value="3.00 A"/>
    <property type="chains" value="E=2-65"/>
</dbReference>
<dbReference type="PDB" id="6WDF">
    <property type="method" value="EM"/>
    <property type="resolution" value="3.30 A"/>
    <property type="chains" value="E=2-65"/>
</dbReference>
<dbReference type="PDB" id="6WDG">
    <property type="method" value="EM"/>
    <property type="resolution" value="3.30 A"/>
    <property type="chains" value="E=2-65"/>
</dbReference>
<dbReference type="PDB" id="6WDH">
    <property type="method" value="EM"/>
    <property type="resolution" value="4.30 A"/>
    <property type="chains" value="E=2-65"/>
</dbReference>
<dbReference type="PDB" id="6WDI">
    <property type="method" value="EM"/>
    <property type="resolution" value="4.00 A"/>
    <property type="chains" value="E=2-65"/>
</dbReference>
<dbReference type="PDB" id="6WDJ">
    <property type="method" value="EM"/>
    <property type="resolution" value="3.70 A"/>
    <property type="chains" value="E=2-65"/>
</dbReference>
<dbReference type="PDB" id="6WDK">
    <property type="method" value="EM"/>
    <property type="resolution" value="3.60 A"/>
    <property type="chains" value="E=2-65"/>
</dbReference>
<dbReference type="PDB" id="6WDL">
    <property type="method" value="EM"/>
    <property type="resolution" value="3.70 A"/>
    <property type="chains" value="E=2-65"/>
</dbReference>
<dbReference type="PDB" id="6WDM">
    <property type="method" value="EM"/>
    <property type="resolution" value="3.60 A"/>
    <property type="chains" value="E=2-65"/>
</dbReference>
<dbReference type="PDB" id="6WNT">
    <property type="method" value="EM"/>
    <property type="resolution" value="3.10 A"/>
    <property type="chains" value="E=2-65"/>
</dbReference>
<dbReference type="PDB" id="6WNV">
    <property type="method" value="EM"/>
    <property type="resolution" value="3.50 A"/>
    <property type="chains" value="E=2-65"/>
</dbReference>
<dbReference type="PDB" id="6WNW">
    <property type="method" value="EM"/>
    <property type="resolution" value="3.20 A"/>
    <property type="chains" value="E=2-65"/>
</dbReference>
<dbReference type="PDB" id="6X6T">
    <property type="method" value="EM"/>
    <property type="resolution" value="3.20 A"/>
    <property type="chains" value="o=1-65"/>
</dbReference>
<dbReference type="PDB" id="6X7F">
    <property type="method" value="EM"/>
    <property type="resolution" value="3.50 A"/>
    <property type="chains" value="o=1-65"/>
</dbReference>
<dbReference type="PDB" id="6X7K">
    <property type="method" value="EM"/>
    <property type="resolution" value="3.10 A"/>
    <property type="chains" value="o=1-65"/>
</dbReference>
<dbReference type="PDB" id="6X9Q">
    <property type="method" value="EM"/>
    <property type="resolution" value="4.80 A"/>
    <property type="chains" value="o=1-65"/>
</dbReference>
<dbReference type="PDB" id="6XDQ">
    <property type="method" value="EM"/>
    <property type="resolution" value="3.70 A"/>
    <property type="chains" value="o=1-65"/>
</dbReference>
<dbReference type="PDB" id="6XDR">
    <property type="method" value="EM"/>
    <property type="resolution" value="4.70 A"/>
    <property type="chains" value="o=1-65"/>
</dbReference>
<dbReference type="PDB" id="6XGF">
    <property type="method" value="EM"/>
    <property type="resolution" value="5.00 A"/>
    <property type="chains" value="o=1-65"/>
</dbReference>
<dbReference type="PDB" id="6XII">
    <property type="method" value="EM"/>
    <property type="resolution" value="7.00 A"/>
    <property type="chains" value="o=1-65"/>
</dbReference>
<dbReference type="PDB" id="6XIJ">
    <property type="method" value="EM"/>
    <property type="resolution" value="8.00 A"/>
    <property type="chains" value="o=1-65"/>
</dbReference>
<dbReference type="PDB" id="6XZ7">
    <property type="method" value="EM"/>
    <property type="resolution" value="2.10 A"/>
    <property type="chains" value="d=2-65"/>
</dbReference>
<dbReference type="PDB" id="6XZA">
    <property type="method" value="EM"/>
    <property type="resolution" value="2.66 A"/>
    <property type="chains" value="d2=2-65"/>
</dbReference>
<dbReference type="PDB" id="6XZB">
    <property type="method" value="EM"/>
    <property type="resolution" value="2.54 A"/>
    <property type="chains" value="d2=2-65"/>
</dbReference>
<dbReference type="PDB" id="6Y69">
    <property type="method" value="EM"/>
    <property type="resolution" value="2.86 A"/>
    <property type="chains" value="3=2-65"/>
</dbReference>
<dbReference type="PDB" id="6YS3">
    <property type="method" value="EM"/>
    <property type="resolution" value="2.58 A"/>
    <property type="chains" value="7=1-65"/>
</dbReference>
<dbReference type="PDB" id="6YSR">
    <property type="method" value="EM"/>
    <property type="resolution" value="3.10 A"/>
    <property type="chains" value="3=1-65"/>
</dbReference>
<dbReference type="PDB" id="6YSS">
    <property type="method" value="EM"/>
    <property type="resolution" value="2.60 A"/>
    <property type="chains" value="3=1-65"/>
</dbReference>
<dbReference type="PDB" id="6YST">
    <property type="method" value="EM"/>
    <property type="resolution" value="3.20 A"/>
    <property type="chains" value="3=1-65"/>
</dbReference>
<dbReference type="PDB" id="6YSU">
    <property type="method" value="EM"/>
    <property type="resolution" value="3.70 A"/>
    <property type="chains" value="3=1-65"/>
</dbReference>
<dbReference type="PDB" id="6ZTJ">
    <property type="method" value="EM"/>
    <property type="resolution" value="3.40 A"/>
    <property type="chains" value="B5=1-65"/>
</dbReference>
<dbReference type="PDB" id="6ZTL">
    <property type="method" value="EM"/>
    <property type="resolution" value="3.50 A"/>
    <property type="chains" value="B5=1-65"/>
</dbReference>
<dbReference type="PDB" id="6ZTM">
    <property type="method" value="EM"/>
    <property type="resolution" value="3.30 A"/>
    <property type="chains" value="B5=1-65"/>
</dbReference>
<dbReference type="PDB" id="6ZTN">
    <property type="method" value="EM"/>
    <property type="resolution" value="3.90 A"/>
    <property type="chains" value="B5=1-65"/>
</dbReference>
<dbReference type="PDB" id="6ZTO">
    <property type="method" value="EM"/>
    <property type="resolution" value="3.00 A"/>
    <property type="chains" value="B5=1-65"/>
</dbReference>
<dbReference type="PDB" id="6ZTP">
    <property type="method" value="EM"/>
    <property type="resolution" value="3.00 A"/>
    <property type="chains" value="B5=1-65"/>
</dbReference>
<dbReference type="PDB" id="6ZU1">
    <property type="method" value="EM"/>
    <property type="resolution" value="3.00 A"/>
    <property type="chains" value="B5=1-65"/>
</dbReference>
<dbReference type="PDB" id="7ABZ">
    <property type="method" value="EM"/>
    <property type="resolution" value="3.21 A"/>
    <property type="chains" value="e=2-65"/>
</dbReference>
<dbReference type="PDB" id="7AC7">
    <property type="method" value="EM"/>
    <property type="resolution" value="3.08 A"/>
    <property type="chains" value="e=2-65"/>
</dbReference>
<dbReference type="PDB" id="7ACJ">
    <property type="method" value="EM"/>
    <property type="resolution" value="3.20 A"/>
    <property type="chains" value="e=2-65"/>
</dbReference>
<dbReference type="PDB" id="7ACR">
    <property type="method" value="EM"/>
    <property type="resolution" value="3.44 A"/>
    <property type="chains" value="e=2-65"/>
</dbReference>
<dbReference type="PDB" id="7B5K">
    <property type="method" value="EM"/>
    <property type="resolution" value="2.90 A"/>
    <property type="chains" value="3=2-65"/>
</dbReference>
<dbReference type="PDB" id="7BL4">
    <property type="method" value="EM"/>
    <property type="resolution" value="2.40 A"/>
    <property type="chains" value="3=1-65"/>
</dbReference>
<dbReference type="PDB" id="7BL6">
    <property type="method" value="EM"/>
    <property type="resolution" value="4.00 A"/>
    <property type="chains" value="3=1-65"/>
</dbReference>
<dbReference type="PDB" id="7BV8">
    <property type="method" value="EM"/>
    <property type="resolution" value="3.14 A"/>
    <property type="chains" value="e=1-65"/>
</dbReference>
<dbReference type="PDB" id="7D6Z">
    <property type="method" value="EM"/>
    <property type="resolution" value="3.40 A"/>
    <property type="chains" value="d=1-65"/>
</dbReference>
<dbReference type="PDB" id="7D80">
    <property type="method" value="EM"/>
    <property type="resolution" value="4.10 A"/>
    <property type="chains" value="1=1-65"/>
</dbReference>
<dbReference type="PDB" id="7JSS">
    <property type="method" value="EM"/>
    <property type="resolution" value="3.70 A"/>
    <property type="chains" value="E=2-65"/>
</dbReference>
<dbReference type="PDB" id="7JSW">
    <property type="method" value="EM"/>
    <property type="resolution" value="3.80 A"/>
    <property type="chains" value="E=2-65"/>
</dbReference>
<dbReference type="PDB" id="7JSZ">
    <property type="method" value="EM"/>
    <property type="resolution" value="3.70 A"/>
    <property type="chains" value="E=2-65"/>
</dbReference>
<dbReference type="PDB" id="7JT1">
    <property type="method" value="EM"/>
    <property type="resolution" value="3.30 A"/>
    <property type="chains" value="E=2-65"/>
</dbReference>
<dbReference type="PDB" id="7JT2">
    <property type="method" value="EM"/>
    <property type="resolution" value="3.50 A"/>
    <property type="chains" value="E=2-65"/>
</dbReference>
<dbReference type="PDB" id="7JT3">
    <property type="method" value="EM"/>
    <property type="resolution" value="3.70 A"/>
    <property type="chains" value="E=2-65"/>
</dbReference>
<dbReference type="PDB" id="7K00">
    <property type="method" value="EM"/>
    <property type="resolution" value="1.98 A"/>
    <property type="chains" value="2=1-65"/>
</dbReference>
<dbReference type="PDB" id="7K50">
    <property type="method" value="EM"/>
    <property type="resolution" value="3.40 A"/>
    <property type="chains" value="E=2-65"/>
</dbReference>
<dbReference type="PDB" id="7K51">
    <property type="method" value="EM"/>
    <property type="resolution" value="3.50 A"/>
    <property type="chains" value="E=2-65"/>
</dbReference>
<dbReference type="PDB" id="7K52">
    <property type="method" value="EM"/>
    <property type="resolution" value="3.40 A"/>
    <property type="chains" value="E=2-65"/>
</dbReference>
<dbReference type="PDB" id="7K53">
    <property type="method" value="EM"/>
    <property type="resolution" value="3.20 A"/>
    <property type="chains" value="E=2-65"/>
</dbReference>
<dbReference type="PDB" id="7K54">
    <property type="method" value="EM"/>
    <property type="resolution" value="3.20 A"/>
    <property type="chains" value="E=2-65"/>
</dbReference>
<dbReference type="PDB" id="7K55">
    <property type="method" value="EM"/>
    <property type="resolution" value="3.30 A"/>
    <property type="chains" value="E=2-65"/>
</dbReference>
<dbReference type="PDB" id="7LV0">
    <property type="method" value="EM"/>
    <property type="resolution" value="3.20 A"/>
    <property type="chains" value="E=2-65"/>
</dbReference>
<dbReference type="PDB" id="7LVK">
    <property type="method" value="EM"/>
    <property type="resolution" value="2.20 A"/>
    <property type="chains" value="l=1-65"/>
</dbReference>
<dbReference type="PDB" id="7M5D">
    <property type="method" value="EM"/>
    <property type="resolution" value="2.80 A"/>
    <property type="chains" value="e=2-65"/>
</dbReference>
<dbReference type="PDB" id="7N1P">
    <property type="method" value="EM"/>
    <property type="resolution" value="2.33 A"/>
    <property type="chains" value="Li=1-65"/>
</dbReference>
<dbReference type="PDB" id="7N2C">
    <property type="method" value="EM"/>
    <property type="resolution" value="2.72 A"/>
    <property type="chains" value="Li=1-65"/>
</dbReference>
<dbReference type="PDB" id="7N2U">
    <property type="method" value="EM"/>
    <property type="resolution" value="2.53 A"/>
    <property type="chains" value="Li=1-65"/>
</dbReference>
<dbReference type="PDB" id="7N2V">
    <property type="method" value="EM"/>
    <property type="resolution" value="2.54 A"/>
    <property type="chains" value="Li=1-65"/>
</dbReference>
<dbReference type="PDB" id="7N30">
    <property type="method" value="EM"/>
    <property type="resolution" value="2.66 A"/>
    <property type="chains" value="Li=1-65"/>
</dbReference>
<dbReference type="PDB" id="7N31">
    <property type="method" value="EM"/>
    <property type="resolution" value="2.69 A"/>
    <property type="chains" value="Li=1-65"/>
</dbReference>
<dbReference type="PDB" id="7NBU">
    <property type="method" value="EM"/>
    <property type="resolution" value="3.11 A"/>
    <property type="chains" value="2=2-65"/>
</dbReference>
<dbReference type="PDB" id="7NWT">
    <property type="method" value="EM"/>
    <property type="resolution" value="2.66 A"/>
    <property type="chains" value="e=1-65"/>
</dbReference>
<dbReference type="PDB" id="7O19">
    <property type="method" value="EM"/>
    <property type="resolution" value="2.90 A"/>
    <property type="chains" value="B3=1-65"/>
</dbReference>
<dbReference type="PDB" id="7O1A">
    <property type="method" value="EM"/>
    <property type="resolution" value="2.40 A"/>
    <property type="chains" value="B3=1-65"/>
</dbReference>
<dbReference type="PDB" id="7O1C">
    <property type="method" value="EM"/>
    <property type="resolution" value="2.60 A"/>
    <property type="chains" value="B3=1-65"/>
</dbReference>
<dbReference type="PDB" id="7OIZ">
    <property type="method" value="EM"/>
    <property type="resolution" value="2.90 A"/>
    <property type="chains" value="2=1-65"/>
</dbReference>
<dbReference type="PDB" id="7OJ0">
    <property type="method" value="EM"/>
    <property type="resolution" value="3.50 A"/>
    <property type="chains" value="2=1-65"/>
</dbReference>
<dbReference type="PDB" id="7P3K">
    <property type="method" value="EM"/>
    <property type="resolution" value="2.90 A"/>
    <property type="chains" value="2=1-65"/>
</dbReference>
<dbReference type="PDB" id="7PJS">
    <property type="method" value="EM"/>
    <property type="resolution" value="2.35 A"/>
    <property type="chains" value="3=1-65"/>
</dbReference>
<dbReference type="PDB" id="7PJT">
    <property type="method" value="EM"/>
    <property type="resolution" value="6.00 A"/>
    <property type="chains" value="3=1-65"/>
</dbReference>
<dbReference type="PDB" id="7PJU">
    <property type="method" value="EM"/>
    <property type="resolution" value="9.50 A"/>
    <property type="chains" value="3=1-65"/>
</dbReference>
<dbReference type="PDB" id="7PJV">
    <property type="method" value="EM"/>
    <property type="resolution" value="3.10 A"/>
    <property type="chains" value="3=1-65"/>
</dbReference>
<dbReference type="PDB" id="7PJW">
    <property type="method" value="EM"/>
    <property type="resolution" value="4.00 A"/>
    <property type="chains" value="3=1-65"/>
</dbReference>
<dbReference type="PDB" id="7PJX">
    <property type="method" value="EM"/>
    <property type="resolution" value="6.50 A"/>
    <property type="chains" value="3=1-65"/>
</dbReference>
<dbReference type="PDB" id="7PJY">
    <property type="method" value="EM"/>
    <property type="resolution" value="3.10 A"/>
    <property type="chains" value="3=1-65"/>
</dbReference>
<dbReference type="PDB" id="7PJZ">
    <property type="method" value="EM"/>
    <property type="resolution" value="6.00 A"/>
    <property type="chains" value="3=1-65"/>
</dbReference>
<dbReference type="PDB" id="7Q4K">
    <property type="method" value="EM"/>
    <property type="resolution" value="3.00 A"/>
    <property type="chains" value="B3=1-65"/>
</dbReference>
<dbReference type="PDB" id="7QG8">
    <property type="method" value="EM"/>
    <property type="resolution" value="3.97 A"/>
    <property type="chains" value="q=1-65"/>
</dbReference>
<dbReference type="PDB" id="7QGN">
    <property type="method" value="EM"/>
    <property type="resolution" value="3.37 A"/>
    <property type="chains" value="q=1-65"/>
</dbReference>
<dbReference type="PDB" id="7QGR">
    <property type="method" value="EM"/>
    <property type="resolution" value="5.70 A"/>
    <property type="chains" value="q=1-65"/>
</dbReference>
<dbReference type="PDB" id="7QQ3">
    <property type="method" value="EM"/>
    <property type="resolution" value="2.10 A"/>
    <property type="chains" value="l=1-65"/>
</dbReference>
<dbReference type="PDB" id="7S1G">
    <property type="method" value="EM"/>
    <property type="resolution" value="2.48 A"/>
    <property type="chains" value="l=1-65"/>
</dbReference>
<dbReference type="PDB" id="7S1H">
    <property type="method" value="EM"/>
    <property type="resolution" value="2.35 A"/>
    <property type="chains" value="l=1-65"/>
</dbReference>
<dbReference type="PDB" id="7S1I">
    <property type="method" value="EM"/>
    <property type="resolution" value="2.48 A"/>
    <property type="chains" value="l=1-65"/>
</dbReference>
<dbReference type="PDB" id="7S1J">
    <property type="method" value="EM"/>
    <property type="resolution" value="2.47 A"/>
    <property type="chains" value="l=1-65"/>
</dbReference>
<dbReference type="PDB" id="7S1K">
    <property type="method" value="EM"/>
    <property type="resolution" value="2.42 A"/>
    <property type="chains" value="l=1-65"/>
</dbReference>
<dbReference type="PDB" id="7SA4">
    <property type="method" value="EM"/>
    <property type="resolution" value="2.55 A"/>
    <property type="chains" value="e=1-65"/>
</dbReference>
<dbReference type="PDB" id="7SS9">
    <property type="method" value="EM"/>
    <property type="resolution" value="3.90 A"/>
    <property type="chains" value="E=2-65"/>
</dbReference>
<dbReference type="PDB" id="7SSD">
    <property type="method" value="EM"/>
    <property type="resolution" value="3.30 A"/>
    <property type="chains" value="E=2-65"/>
</dbReference>
<dbReference type="PDB" id="7SSL">
    <property type="method" value="EM"/>
    <property type="resolution" value="3.80 A"/>
    <property type="chains" value="E=2-65"/>
</dbReference>
<dbReference type="PDB" id="7SSN">
    <property type="method" value="EM"/>
    <property type="resolution" value="3.20 A"/>
    <property type="chains" value="E=2-65"/>
</dbReference>
<dbReference type="PDB" id="7SSO">
    <property type="method" value="EM"/>
    <property type="resolution" value="3.20 A"/>
    <property type="chains" value="E=2-65"/>
</dbReference>
<dbReference type="PDB" id="7SSW">
    <property type="method" value="EM"/>
    <property type="resolution" value="3.80 A"/>
    <property type="chains" value="E=2-65"/>
</dbReference>
<dbReference type="PDB" id="7ST2">
    <property type="method" value="EM"/>
    <property type="resolution" value="2.90 A"/>
    <property type="chains" value="E=2-65"/>
</dbReference>
<dbReference type="PDB" id="7ST6">
    <property type="method" value="EM"/>
    <property type="resolution" value="3.00 A"/>
    <property type="chains" value="E=2-65"/>
</dbReference>
<dbReference type="PDB" id="7ST7">
    <property type="method" value="EM"/>
    <property type="resolution" value="3.20 A"/>
    <property type="chains" value="E=2-65"/>
</dbReference>
<dbReference type="PDB" id="7TOS">
    <property type="method" value="EM"/>
    <property type="resolution" value="2.90 A"/>
    <property type="chains" value="L35=2-65"/>
</dbReference>
<dbReference type="PDB" id="7UG7">
    <property type="method" value="EM"/>
    <property type="resolution" value="2.58 A"/>
    <property type="chains" value="Li=1-65"/>
</dbReference>
<dbReference type="PDB" id="7UPH">
    <property type="method" value="EM"/>
    <property type="resolution" value="4.18 A"/>
    <property type="chains" value="l=2-65"/>
</dbReference>
<dbReference type="PDB" id="7Y7C">
    <property type="method" value="EM"/>
    <property type="resolution" value="2.51 A"/>
    <property type="chains" value="2=1-65"/>
</dbReference>
<dbReference type="PDB" id="7Y7D">
    <property type="method" value="EM"/>
    <property type="resolution" value="2.58 A"/>
    <property type="chains" value="2=1-65"/>
</dbReference>
<dbReference type="PDB" id="7Y7E">
    <property type="method" value="EM"/>
    <property type="resolution" value="2.41 A"/>
    <property type="chains" value="2=1-65"/>
</dbReference>
<dbReference type="PDB" id="7Y7F">
    <property type="method" value="EM"/>
    <property type="resolution" value="2.43 A"/>
    <property type="chains" value="2=1-65"/>
</dbReference>
<dbReference type="PDB" id="7Y7G">
    <property type="method" value="EM"/>
    <property type="resolution" value="2.34 A"/>
    <property type="chains" value="2=1-65"/>
</dbReference>
<dbReference type="PDB" id="7Y7H">
    <property type="method" value="EM"/>
    <property type="resolution" value="2.51 A"/>
    <property type="chains" value="2=1-65"/>
</dbReference>
<dbReference type="PDB" id="7YLA">
    <property type="method" value="EM"/>
    <property type="resolution" value="2.52 A"/>
    <property type="chains" value="l=2-65"/>
</dbReference>
<dbReference type="PDB" id="7Z20">
    <property type="method" value="EM"/>
    <property type="resolution" value="2.29 A"/>
    <property type="chains" value="7=1-65"/>
</dbReference>
<dbReference type="PDB" id="7ZOD">
    <property type="method" value="EM"/>
    <property type="resolution" value="2.56 A"/>
    <property type="chains" value="7=1-65"/>
</dbReference>
<dbReference type="PDB" id="7ZP8">
    <property type="method" value="EM"/>
    <property type="resolution" value="2.20 A"/>
    <property type="chains" value="7=1-65"/>
</dbReference>
<dbReference type="PDB" id="7ZQ5">
    <property type="method" value="EM"/>
    <property type="resolution" value="2.70 A"/>
    <property type="chains" value="7=1-65"/>
</dbReference>
<dbReference type="PDB" id="7ZQ6">
    <property type="method" value="EM"/>
    <property type="resolution" value="2.75 A"/>
    <property type="chains" value="7=1-65"/>
</dbReference>
<dbReference type="PDB" id="7ZTA">
    <property type="method" value="EM"/>
    <property type="resolution" value="2.70 A"/>
    <property type="chains" value="L351=2-65"/>
</dbReference>
<dbReference type="PDB" id="8A3L">
    <property type="method" value="EM"/>
    <property type="resolution" value="3.42 A"/>
    <property type="chains" value="2=1-65"/>
</dbReference>
<dbReference type="PDB" id="8AKN">
    <property type="method" value="EM"/>
    <property type="resolution" value="2.30 A"/>
    <property type="chains" value="2=1-65"/>
</dbReference>
<dbReference type="PDB" id="8AM9">
    <property type="method" value="EM"/>
    <property type="resolution" value="2.80 A"/>
    <property type="chains" value="2=1-65"/>
</dbReference>
<dbReference type="PDB" id="8ANA">
    <property type="method" value="EM"/>
    <property type="resolution" value="2.10 A"/>
    <property type="chains" value="2=1-65"/>
</dbReference>
<dbReference type="PDB" id="8AP4">
    <property type="method" value="EM"/>
    <property type="resolution" value="3.00 A"/>
    <property type="chains" value="2=1-65"/>
</dbReference>
<dbReference type="PDB" id="8AYE">
    <property type="method" value="EM"/>
    <property type="resolution" value="1.96 A"/>
    <property type="chains" value="2=1-65"/>
</dbReference>
<dbReference type="PDB" id="8B0X">
    <property type="method" value="EM"/>
    <property type="resolution" value="1.55 A"/>
    <property type="chains" value="2=1-65"/>
</dbReference>
<dbReference type="PDB" id="8B7Y">
    <property type="method" value="EM"/>
    <property type="resolution" value="3.00 A"/>
    <property type="chains" value="l=1-65"/>
</dbReference>
<dbReference type="PDB" id="8BF7">
    <property type="method" value="EM"/>
    <property type="resolution" value="2.33 A"/>
    <property type="chains" value="d=1-65"/>
</dbReference>
<dbReference type="PDB" id="8BGE">
    <property type="method" value="EM"/>
    <property type="resolution" value="2.11 A"/>
    <property type="chains" value="d=1-65"/>
</dbReference>
<dbReference type="PDB" id="8BGH">
    <property type="method" value="EM"/>
    <property type="resolution" value="2.88 A"/>
    <property type="chains" value="d=1-65"/>
</dbReference>
<dbReference type="PDB" id="8BH4">
    <property type="method" value="EM"/>
    <property type="resolution" value="2.62 A"/>
    <property type="chains" value="d=1-65"/>
</dbReference>
<dbReference type="PDB" id="8BHJ">
    <property type="method" value="EM"/>
    <property type="resolution" value="2.81 A"/>
    <property type="chains" value="d=1-65"/>
</dbReference>
<dbReference type="PDB" id="8BHL">
    <property type="method" value="EM"/>
    <property type="resolution" value="2.21 A"/>
    <property type="chains" value="d=1-65"/>
</dbReference>
<dbReference type="PDB" id="8BHN">
    <property type="method" value="EM"/>
    <property type="resolution" value="2.85 A"/>
    <property type="chains" value="d=1-65"/>
</dbReference>
<dbReference type="PDB" id="8BHP">
    <property type="method" value="EM"/>
    <property type="resolution" value="2.37 A"/>
    <property type="chains" value="d=1-65"/>
</dbReference>
<dbReference type="PDB" id="8BIL">
    <property type="method" value="EM"/>
    <property type="resolution" value="2.04 A"/>
    <property type="chains" value="d=1-65"/>
</dbReference>
<dbReference type="PDB" id="8BIM">
    <property type="method" value="EM"/>
    <property type="resolution" value="2.04 A"/>
    <property type="chains" value="d=1-65"/>
</dbReference>
<dbReference type="PDB" id="8C8X">
    <property type="method" value="EM"/>
    <property type="resolution" value="3.93 A"/>
    <property type="chains" value="3=1-65"/>
</dbReference>
<dbReference type="PDB" id="8CAM">
    <property type="method" value="EM"/>
    <property type="resolution" value="1.86 A"/>
    <property type="chains" value="2=1-65"/>
</dbReference>
<dbReference type="PDB" id="8CEU">
    <property type="method" value="EM"/>
    <property type="resolution" value="1.83 A"/>
    <property type="chains" value="2=1-65"/>
</dbReference>
<dbReference type="PDB" id="8CGD">
    <property type="method" value="EM"/>
    <property type="resolution" value="1.98 A"/>
    <property type="chains" value="2=1-65"/>
</dbReference>
<dbReference type="PDB" id="8CGK">
    <property type="method" value="EM"/>
    <property type="resolution" value="1.64 A"/>
    <property type="chains" value="2=1-65"/>
</dbReference>
<dbReference type="PDB" id="8CGV">
    <property type="method" value="EM"/>
    <property type="resolution" value="1.66 A"/>
    <property type="chains" value="2=1-65"/>
</dbReference>
<dbReference type="PDB" id="8EIU">
    <property type="method" value="EM"/>
    <property type="resolution" value="2.24 A"/>
    <property type="chains" value="2=1-65"/>
</dbReference>
<dbReference type="PDB" id="8EKC">
    <property type="method" value="EM"/>
    <property type="resolution" value="2.70 A"/>
    <property type="chains" value="7=1-65"/>
</dbReference>
<dbReference type="PDB" id="8EMM">
    <property type="method" value="EM"/>
    <property type="resolution" value="2.10 A"/>
    <property type="chains" value="2=1-65"/>
</dbReference>
<dbReference type="PDB" id="8FIZ">
    <property type="method" value="EM"/>
    <property type="resolution" value="3.80 A"/>
    <property type="chains" value="BO=1-65"/>
</dbReference>
<dbReference type="PDB" id="8FTO">
    <property type="method" value="EM"/>
    <property type="resolution" value="1.85 A"/>
    <property type="chains" value="2=1-65"/>
</dbReference>
<dbReference type="PDB" id="8FZD">
    <property type="method" value="EM"/>
    <property type="resolution" value="3.10 A"/>
    <property type="chains" value="7=1-65"/>
</dbReference>
<dbReference type="PDB" id="8FZE">
    <property type="method" value="EM"/>
    <property type="resolution" value="3.00 A"/>
    <property type="chains" value="7=1-65"/>
</dbReference>
<dbReference type="PDB" id="8FZF">
    <property type="method" value="EM"/>
    <property type="resolution" value="3.20 A"/>
    <property type="chains" value="7=1-65"/>
</dbReference>
<dbReference type="PDB" id="8FZG">
    <property type="method" value="EM"/>
    <property type="resolution" value="3.10 A"/>
    <property type="chains" value="7=1-65"/>
</dbReference>
<dbReference type="PDB" id="8FZH">
    <property type="method" value="EM"/>
    <property type="resolution" value="2.90 A"/>
    <property type="chains" value="7=1-65"/>
</dbReference>
<dbReference type="PDB" id="8FZI">
    <property type="method" value="EM"/>
    <property type="resolution" value="3.10 A"/>
    <property type="chains" value="7=1-65"/>
</dbReference>
<dbReference type="PDB" id="8FZJ">
    <property type="method" value="EM"/>
    <property type="resolution" value="3.00 A"/>
    <property type="chains" value="7=1-65"/>
</dbReference>
<dbReference type="PDB" id="8G2U">
    <property type="method" value="EM"/>
    <property type="resolution" value="3.00 A"/>
    <property type="chains" value="3=2-65"/>
</dbReference>
<dbReference type="PDB" id="8G31">
    <property type="method" value="EM"/>
    <property type="resolution" value="3.20 A"/>
    <property type="chains" value="3=2-65"/>
</dbReference>
<dbReference type="PDB" id="8G34">
    <property type="method" value="EM"/>
    <property type="resolution" value="3.20 A"/>
    <property type="chains" value="3=2-65"/>
</dbReference>
<dbReference type="PDB" id="8G38">
    <property type="method" value="EM"/>
    <property type="resolution" value="3.20 A"/>
    <property type="chains" value="3=2-65"/>
</dbReference>
<dbReference type="PDB" id="8G6W">
    <property type="method" value="EM"/>
    <property type="resolution" value="2.02 A"/>
    <property type="chains" value="2=1-65"/>
</dbReference>
<dbReference type="PDB" id="8G6X">
    <property type="method" value="EM"/>
    <property type="resolution" value="2.31 A"/>
    <property type="chains" value="2=1-65"/>
</dbReference>
<dbReference type="PDB" id="8G6Y">
    <property type="method" value="EM"/>
    <property type="resolution" value="2.09 A"/>
    <property type="chains" value="2=1-65"/>
</dbReference>
<dbReference type="PDB" id="8G7P">
    <property type="method" value="EM"/>
    <property type="resolution" value="2.90 A"/>
    <property type="chains" value="7=1-65"/>
</dbReference>
<dbReference type="PDB" id="8G7Q">
    <property type="method" value="EM"/>
    <property type="resolution" value="3.10 A"/>
    <property type="chains" value="7=1-65"/>
</dbReference>
<dbReference type="PDB" id="8G7R">
    <property type="method" value="EM"/>
    <property type="resolution" value="2.80 A"/>
    <property type="chains" value="7=1-65"/>
</dbReference>
<dbReference type="PDB" id="8G7S">
    <property type="method" value="EM"/>
    <property type="resolution" value="3.10 A"/>
    <property type="chains" value="7=1-65"/>
</dbReference>
<dbReference type="PDB" id="8HSP">
    <property type="method" value="EM"/>
    <property type="resolution" value="2.32 A"/>
    <property type="chains" value="2=1-65"/>
</dbReference>
<dbReference type="PDB" id="8HTZ">
    <property type="method" value="EM"/>
    <property type="resolution" value="2.40 A"/>
    <property type="chains" value="2=1-65"/>
</dbReference>
<dbReference type="PDB" id="8HU1">
    <property type="method" value="EM"/>
    <property type="resolution" value="2.69 A"/>
    <property type="chains" value="2=1-65"/>
</dbReference>
<dbReference type="PDB" id="8IFB">
    <property type="method" value="EM"/>
    <property type="resolution" value="2.43 A"/>
    <property type="chains" value="2=1-65"/>
</dbReference>
<dbReference type="PDB" id="8IFC">
    <property type="method" value="EM"/>
    <property type="resolution" value="2.90 A"/>
    <property type="chains" value="2=1-65"/>
</dbReference>
<dbReference type="PDB" id="8J1Z">
    <property type="method" value="EM"/>
    <property type="resolution" value="2.60 A"/>
    <property type="chains" value="2=1-65"/>
</dbReference>
<dbReference type="PDB" id="8P16">
    <property type="method" value="EM"/>
    <property type="resolution" value="2.77 A"/>
    <property type="chains" value="e=1-65"/>
</dbReference>
<dbReference type="PDB" id="8P17">
    <property type="method" value="EM"/>
    <property type="resolution" value="2.78 A"/>
    <property type="chains" value="e=1-65"/>
</dbReference>
<dbReference type="PDB" id="8P18">
    <property type="method" value="EM"/>
    <property type="resolution" value="2.77 A"/>
    <property type="chains" value="e=1-65"/>
</dbReference>
<dbReference type="PDB" id="8PEG">
    <property type="method" value="EM"/>
    <property type="resolution" value="3.30 A"/>
    <property type="chains" value="6=1-65"/>
</dbReference>
<dbReference type="PDB" id="8PHJ">
    <property type="method" value="EM"/>
    <property type="resolution" value="3.67 A"/>
    <property type="chains" value="2=1-65"/>
</dbReference>
<dbReference type="PDB" id="8PKL">
    <property type="method" value="EM"/>
    <property type="resolution" value="3.09 A"/>
    <property type="chains" value="6=1-65"/>
</dbReference>
<dbReference type="PDB" id="8PVA">
    <property type="method" value="EM"/>
    <property type="resolution" value="4.50 A"/>
    <property type="chains" value="2=1-65"/>
</dbReference>
<dbReference type="PDB" id="8Q4F">
    <property type="method" value="EM"/>
    <property type="resolution" value="3.10 A"/>
    <property type="chains" value="2=1-65"/>
</dbReference>
<dbReference type="PDB" id="8QBT">
    <property type="method" value="EM"/>
    <property type="resolution" value="2.20 A"/>
    <property type="chains" value="d=1-65"/>
</dbReference>
<dbReference type="PDB" id="8QK7">
    <property type="method" value="EM"/>
    <property type="resolution" value="2.77 A"/>
    <property type="chains" value="e=1-65"/>
</dbReference>
<dbReference type="PDB" id="8QOA">
    <property type="method" value="EM"/>
    <property type="resolution" value="2.00 A"/>
    <property type="chains" value="2=1-65"/>
</dbReference>
<dbReference type="PDB" id="8R3V">
    <property type="method" value="EM"/>
    <property type="resolution" value="3.28 A"/>
    <property type="chains" value="62=1-65"/>
</dbReference>
<dbReference type="PDB" id="8R6C">
    <property type="method" value="EM"/>
    <property type="resolution" value="2.20 A"/>
    <property type="chains" value="2=1-65"/>
</dbReference>
<dbReference type="PDB" id="8R8M">
    <property type="method" value="EM"/>
    <property type="resolution" value="2.40 A"/>
    <property type="chains" value="2=1-65"/>
</dbReference>
<dbReference type="PDB" id="8RCL">
    <property type="method" value="EM"/>
    <property type="resolution" value="3.49 A"/>
    <property type="chains" value="62=1-65"/>
</dbReference>
<dbReference type="PDB" id="8RCM">
    <property type="method" value="EM"/>
    <property type="resolution" value="3.59 A"/>
    <property type="chains" value="62=1-65"/>
</dbReference>
<dbReference type="PDB" id="8RCS">
    <property type="method" value="EM"/>
    <property type="resolution" value="4.46 A"/>
    <property type="chains" value="62=1-65"/>
</dbReference>
<dbReference type="PDB" id="8RCT">
    <property type="method" value="EM"/>
    <property type="resolution" value="5.32 A"/>
    <property type="chains" value="62=1-65"/>
</dbReference>
<dbReference type="PDB" id="8RPY">
    <property type="method" value="EM"/>
    <property type="resolution" value="2.64 A"/>
    <property type="chains" value="3=2-65"/>
</dbReference>
<dbReference type="PDB" id="8RPZ">
    <property type="method" value="EM"/>
    <property type="resolution" value="2.44 A"/>
    <property type="chains" value="3=2-65"/>
</dbReference>
<dbReference type="PDB" id="8RQ0">
    <property type="method" value="EM"/>
    <property type="resolution" value="2.44 A"/>
    <property type="chains" value="3=2-65"/>
</dbReference>
<dbReference type="PDB" id="8RQ2">
    <property type="method" value="EM"/>
    <property type="resolution" value="2.44 A"/>
    <property type="chains" value="3=2-65"/>
</dbReference>
<dbReference type="PDB" id="8SYL">
    <property type="method" value="EM"/>
    <property type="resolution" value="2.90 A"/>
    <property type="chains" value="7=1-65"/>
</dbReference>
<dbReference type="PDB" id="8T5D">
    <property type="method" value="EM"/>
    <property type="resolution" value="3.20 A"/>
    <property type="chains" value="3=2-65"/>
</dbReference>
<dbReference type="PDB" id="8T5H">
    <property type="method" value="EM"/>
    <property type="resolution" value="3.30 A"/>
    <property type="chains" value="3=2-65"/>
</dbReference>
<dbReference type="PDB" id="8UPO">
    <property type="method" value="EM"/>
    <property type="resolution" value="5.50 A"/>
    <property type="chains" value="o=1-65"/>
</dbReference>
<dbReference type="PDB" id="8UPR">
    <property type="method" value="EM"/>
    <property type="resolution" value="5.30 A"/>
    <property type="chains" value="o=1-65"/>
</dbReference>
<dbReference type="PDB" id="8UQL">
    <property type="method" value="EM"/>
    <property type="resolution" value="3.20 A"/>
    <property type="chains" value="o=1-65"/>
</dbReference>
<dbReference type="PDB" id="8UQM">
    <property type="method" value="EM"/>
    <property type="resolution" value="5.30 A"/>
    <property type="chains" value="o=1-65"/>
</dbReference>
<dbReference type="PDB" id="8UQP">
    <property type="method" value="EM"/>
    <property type="resolution" value="3.80 A"/>
    <property type="chains" value="o=1-65"/>
</dbReference>
<dbReference type="PDB" id="8UR0">
    <property type="method" value="EM"/>
    <property type="resolution" value="3.40 A"/>
    <property type="chains" value="o=1-65"/>
</dbReference>
<dbReference type="PDB" id="8URH">
    <property type="method" value="EM"/>
    <property type="resolution" value="5.70 A"/>
    <property type="chains" value="o=1-65"/>
</dbReference>
<dbReference type="PDB" id="8URI">
    <property type="method" value="EM"/>
    <property type="resolution" value="5.30 A"/>
    <property type="chains" value="o=1-65"/>
</dbReference>
<dbReference type="PDB" id="8URX">
    <property type="method" value="EM"/>
    <property type="resolution" value="6.60 A"/>
    <property type="chains" value="o=1-65"/>
</dbReference>
<dbReference type="PDB" id="8URY">
    <property type="method" value="EM"/>
    <property type="resolution" value="3.10 A"/>
    <property type="chains" value="o=2-65"/>
</dbReference>
<dbReference type="PDB" id="8VS9">
    <property type="method" value="EM"/>
    <property type="resolution" value="3.90 A"/>
    <property type="chains" value="L35=1-65"/>
</dbReference>
<dbReference type="PDB" id="8VSA">
    <property type="method" value="EM"/>
    <property type="resolution" value="3.70 A"/>
    <property type="chains" value="L35=1-65"/>
</dbReference>
<dbReference type="PDB" id="8W51">
    <property type="method" value="EM"/>
    <property type="resolution" value="2.40 A"/>
    <property type="chains" value="4=1-65"/>
</dbReference>
<dbReference type="PDB" id="8YUO">
    <property type="method" value="EM"/>
    <property type="resolution" value="2.25 A"/>
    <property type="chains" value="2=1-65"/>
</dbReference>
<dbReference type="PDB" id="8YUP">
    <property type="method" value="EM"/>
    <property type="resolution" value="2.39 A"/>
    <property type="chains" value="2=1-65"/>
</dbReference>
<dbReference type="PDB" id="8YUQ">
    <property type="method" value="EM"/>
    <property type="resolution" value="2.41 A"/>
    <property type="chains" value="2=1-65"/>
</dbReference>
<dbReference type="PDB" id="8YUR">
    <property type="method" value="EM"/>
    <property type="resolution" value="2.47 A"/>
    <property type="chains" value="2=1-65"/>
</dbReference>
<dbReference type="PDB" id="8YUS">
    <property type="method" value="EM"/>
    <property type="resolution" value="2.43 A"/>
    <property type="chains" value="2=1-65"/>
</dbReference>
<dbReference type="PDB" id="9AX7">
    <property type="method" value="EM"/>
    <property type="resolution" value="2.63 A"/>
    <property type="chains" value="2=1-65"/>
</dbReference>
<dbReference type="PDB" id="9CG5">
    <property type="method" value="EM"/>
    <property type="resolution" value="2.59 A"/>
    <property type="chains" value="2=1-65"/>
</dbReference>
<dbReference type="PDB" id="9CG6">
    <property type="method" value="EM"/>
    <property type="resolution" value="2.61 A"/>
    <property type="chains" value="2=1-65"/>
</dbReference>
<dbReference type="PDB" id="9CG7">
    <property type="method" value="EM"/>
    <property type="resolution" value="2.75 A"/>
    <property type="chains" value="2=1-65"/>
</dbReference>
<dbReference type="PDB" id="9D89">
    <property type="method" value="EM"/>
    <property type="resolution" value="1.95 A"/>
    <property type="chains" value="B=1-65"/>
</dbReference>
<dbReference type="PDB" id="9FBV">
    <property type="method" value="EM"/>
    <property type="resolution" value="2.40 A"/>
    <property type="chains" value="2=1-65"/>
</dbReference>
<dbReference type="PDB" id="9GFT">
    <property type="method" value="EM"/>
    <property type="resolution" value="3.10 A"/>
    <property type="chains" value="Ay/q=1-65"/>
</dbReference>
<dbReference type="PDB" id="9GGR">
    <property type="method" value="EM"/>
    <property type="resolution" value="3.20 A"/>
    <property type="chains" value="Ay/q=1-65"/>
</dbReference>
<dbReference type="PDB" id="9H3X">
    <property type="method" value="EM"/>
    <property type="resolution" value="4.12 A"/>
    <property type="chains" value="3=2-65"/>
</dbReference>
<dbReference type="PDB" id="9H3Y">
    <property type="method" value="EM"/>
    <property type="resolution" value="3.09 A"/>
    <property type="chains" value="3=2-65"/>
</dbReference>
<dbReference type="PDB" id="9H3Z">
    <property type="method" value="EM"/>
    <property type="resolution" value="2.98 A"/>
    <property type="chains" value="3=2-65"/>
</dbReference>
<dbReference type="PDB" id="9HA6">
    <property type="method" value="EM"/>
    <property type="resolution" value="3.08 A"/>
    <property type="chains" value="3=2-65"/>
</dbReference>
<dbReference type="PDB" id="9MOR">
    <property type="method" value="EM"/>
    <property type="resolution" value="2.65 A"/>
    <property type="chains" value="e=1-65"/>
</dbReference>
<dbReference type="PDB" id="9MQ4">
    <property type="method" value="EM"/>
    <property type="resolution" value="2.78 A"/>
    <property type="chains" value="e=1-65"/>
</dbReference>
<dbReference type="PDBsum" id="2J28"/>
<dbReference type="PDBsum" id="2RDO"/>
<dbReference type="PDBsum" id="3BBX"/>
<dbReference type="PDBsum" id="3J5L"/>
<dbReference type="PDBsum" id="3J7Z"/>
<dbReference type="PDBsum" id="3J8G"/>
<dbReference type="PDBsum" id="3J9Y"/>
<dbReference type="PDBsum" id="3J9Z"/>
<dbReference type="PDBsum" id="3JA1"/>
<dbReference type="PDBsum" id="3JBU"/>
<dbReference type="PDBsum" id="3JBV"/>
<dbReference type="PDBsum" id="3JCD"/>
<dbReference type="PDBsum" id="3JCE"/>
<dbReference type="PDBsum" id="3JCJ"/>
<dbReference type="PDBsum" id="3JCN"/>
<dbReference type="PDBsum" id="4CSU"/>
<dbReference type="PDBsum" id="4U1U"/>
<dbReference type="PDBsum" id="4U1V"/>
<dbReference type="PDBsum" id="4U20"/>
<dbReference type="PDBsum" id="4U24"/>
<dbReference type="PDBsum" id="4U25"/>
<dbReference type="PDBsum" id="4U26"/>
<dbReference type="PDBsum" id="4U27"/>
<dbReference type="PDBsum" id="4UY8"/>
<dbReference type="PDBsum" id="4V4H"/>
<dbReference type="PDBsum" id="4V4Q"/>
<dbReference type="PDBsum" id="4V50"/>
<dbReference type="PDBsum" id="4V52"/>
<dbReference type="PDBsum" id="4V53"/>
<dbReference type="PDBsum" id="4V54"/>
<dbReference type="PDBsum" id="4V55"/>
<dbReference type="PDBsum" id="4V56"/>
<dbReference type="PDBsum" id="4V57"/>
<dbReference type="PDBsum" id="4V5B"/>
<dbReference type="PDBsum" id="4V5H"/>
<dbReference type="PDBsum" id="4V5Y"/>
<dbReference type="PDBsum" id="4V64"/>
<dbReference type="PDBsum" id="4V65"/>
<dbReference type="PDBsum" id="4V66"/>
<dbReference type="PDBsum" id="4V69"/>
<dbReference type="PDBsum" id="4V6C"/>
<dbReference type="PDBsum" id="4V6D"/>
<dbReference type="PDBsum" id="4V6E"/>
<dbReference type="PDBsum" id="4V6K"/>
<dbReference type="PDBsum" id="4V6L"/>
<dbReference type="PDBsum" id="4V6M"/>
<dbReference type="PDBsum" id="4V6N"/>
<dbReference type="PDBsum" id="4V6O"/>
<dbReference type="PDBsum" id="4V6P"/>
<dbReference type="PDBsum" id="4V6Q"/>
<dbReference type="PDBsum" id="4V6R"/>
<dbReference type="PDBsum" id="4V6S"/>
<dbReference type="PDBsum" id="4V6T"/>
<dbReference type="PDBsum" id="4V6V"/>
<dbReference type="PDBsum" id="4V6Y"/>
<dbReference type="PDBsum" id="4V6Z"/>
<dbReference type="PDBsum" id="4V70"/>
<dbReference type="PDBsum" id="4V71"/>
<dbReference type="PDBsum" id="4V72"/>
<dbReference type="PDBsum" id="4V73"/>
<dbReference type="PDBsum" id="4V74"/>
<dbReference type="PDBsum" id="4V75"/>
<dbReference type="PDBsum" id="4V76"/>
<dbReference type="PDBsum" id="4V77"/>
<dbReference type="PDBsum" id="4V78"/>
<dbReference type="PDBsum" id="4V79"/>
<dbReference type="PDBsum" id="4V7A"/>
<dbReference type="PDBsum" id="4V7B"/>
<dbReference type="PDBsum" id="4V7C"/>
<dbReference type="PDBsum" id="4V7D"/>
<dbReference type="PDBsum" id="4V7I"/>
<dbReference type="PDBsum" id="4V7S"/>
<dbReference type="PDBsum" id="4V7T"/>
<dbReference type="PDBsum" id="4V7U"/>
<dbReference type="PDBsum" id="4V7V"/>
<dbReference type="PDBsum" id="4V85"/>
<dbReference type="PDBsum" id="4V89"/>
<dbReference type="PDBsum" id="4V9C"/>
<dbReference type="PDBsum" id="4V9D"/>
<dbReference type="PDBsum" id="4V9O"/>
<dbReference type="PDBsum" id="4V9P"/>
<dbReference type="PDBsum" id="4WF1"/>
<dbReference type="PDBsum" id="4WOI"/>
<dbReference type="PDBsum" id="4WWW"/>
<dbReference type="PDBsum" id="4YBB"/>
<dbReference type="PDBsum" id="5ADY"/>
<dbReference type="PDBsum" id="5AFI"/>
<dbReference type="PDBsum" id="5AKA"/>
<dbReference type="PDBsum" id="5GAD"/>
<dbReference type="PDBsum" id="5GAE"/>
<dbReference type="PDBsum" id="5GAF"/>
<dbReference type="PDBsum" id="5GAG"/>
<dbReference type="PDBsum" id="5GAH"/>
<dbReference type="PDBsum" id="5H5U"/>
<dbReference type="PDBsum" id="5IQR"/>
<dbReference type="PDBsum" id="5IT8"/>
<dbReference type="PDBsum" id="5J5B"/>
<dbReference type="PDBsum" id="5J7L"/>
<dbReference type="PDBsum" id="5J88"/>
<dbReference type="PDBsum" id="5J8A"/>
<dbReference type="PDBsum" id="5J91"/>
<dbReference type="PDBsum" id="5JC9"/>
<dbReference type="PDBsum" id="5JTE"/>
<dbReference type="PDBsum" id="5JU8"/>
<dbReference type="PDBsum" id="5KCR"/>
<dbReference type="PDBsum" id="5KCS"/>
<dbReference type="PDBsum" id="5KPS"/>
<dbReference type="PDBsum" id="5KPV"/>
<dbReference type="PDBsum" id="5KPW"/>
<dbReference type="PDBsum" id="5KPX"/>
<dbReference type="PDBsum" id="5L3P"/>
<dbReference type="PDBsum" id="5LZA"/>
<dbReference type="PDBsum" id="5LZB"/>
<dbReference type="PDBsum" id="5LZC"/>
<dbReference type="PDBsum" id="5LZD"/>
<dbReference type="PDBsum" id="5LZE"/>
<dbReference type="PDBsum" id="5LZF"/>
<dbReference type="PDBsum" id="5MDV"/>
<dbReference type="PDBsum" id="5MDW"/>
<dbReference type="PDBsum" id="5MDY"/>
<dbReference type="PDBsum" id="5MDZ"/>
<dbReference type="PDBsum" id="5MGP"/>
<dbReference type="PDBsum" id="5NCO"/>
<dbReference type="PDBsum" id="5NP6"/>
<dbReference type="PDBsum" id="5NWY"/>
<dbReference type="PDBsum" id="5O2R"/>
<dbReference type="PDBsum" id="5U4I"/>
<dbReference type="PDBsum" id="5U9F"/>
<dbReference type="PDBsum" id="5U9G"/>
<dbReference type="PDBsum" id="5UYK"/>
<dbReference type="PDBsum" id="5UYL"/>
<dbReference type="PDBsum" id="5UYM"/>
<dbReference type="PDBsum" id="5UYN"/>
<dbReference type="PDBsum" id="5UYP"/>
<dbReference type="PDBsum" id="5UYQ"/>
<dbReference type="PDBsum" id="5WDT"/>
<dbReference type="PDBsum" id="5WE4"/>
<dbReference type="PDBsum" id="5WE6"/>
<dbReference type="PDBsum" id="5WF0"/>
<dbReference type="PDBsum" id="5WFK"/>
<dbReference type="PDBsum" id="5WFS"/>
<dbReference type="PDBsum" id="6BU8"/>
<dbReference type="PDBsum" id="6BY1"/>
<dbReference type="PDBsum" id="6C4I"/>
<dbReference type="PDBsum" id="6DNC"/>
<dbReference type="PDBsum" id="6ENF"/>
<dbReference type="PDBsum" id="6ENJ"/>
<dbReference type="PDBsum" id="6ENU"/>
<dbReference type="PDBsum" id="6GBZ"/>
<dbReference type="PDBsum" id="6GC0"/>
<dbReference type="PDBsum" id="6GC8"/>
<dbReference type="PDBsum" id="6GWT"/>
<dbReference type="PDBsum" id="6GXM"/>
<dbReference type="PDBsum" id="6GXN"/>
<dbReference type="PDBsum" id="6GXO"/>
<dbReference type="PDBsum" id="6GXP"/>
<dbReference type="PDBsum" id="6H4N"/>
<dbReference type="PDBsum" id="6H58"/>
<dbReference type="PDBsum" id="6HRM"/>
<dbReference type="PDBsum" id="6I0Y"/>
<dbReference type="PDBsum" id="6I7V"/>
<dbReference type="PDBsum" id="6O9J"/>
<dbReference type="PDBsum" id="6O9K"/>
<dbReference type="PDBsum" id="6OFX"/>
<dbReference type="PDBsum" id="6OG7"/>
<dbReference type="PDBsum" id="6OGF"/>
<dbReference type="PDBsum" id="6OGG"/>
<dbReference type="PDBsum" id="6OGI"/>
<dbReference type="PDBsum" id="6OM6"/>
<dbReference type="PDBsum" id="6ORE"/>
<dbReference type="PDBsum" id="6ORL"/>
<dbReference type="PDBsum" id="6OSK"/>
<dbReference type="PDBsum" id="6OSQ"/>
<dbReference type="PDBsum" id="6OST"/>
<dbReference type="PDBsum" id="6OT3"/>
<dbReference type="PDBsum" id="6OUO"/>
<dbReference type="PDBsum" id="6PJ6"/>
<dbReference type="PDBsum" id="6Q97"/>
<dbReference type="PDBsum" id="6Q98"/>
<dbReference type="PDBsum" id="6Q9A"/>
<dbReference type="PDBsum" id="6QDW"/>
<dbReference type="PDBsum" id="6QUL"/>
<dbReference type="PDBsum" id="6S0K"/>
<dbReference type="PDBsum" id="6SZS"/>
<dbReference type="PDBsum" id="6TBV"/>
<dbReference type="PDBsum" id="6TC3"/>
<dbReference type="PDBsum" id="6U48"/>
<dbReference type="PDBsum" id="6VU3"/>
<dbReference type="PDBsum" id="6VWL"/>
<dbReference type="PDBsum" id="6VWM"/>
<dbReference type="PDBsum" id="6VWN"/>
<dbReference type="PDBsum" id="6VYQ"/>
<dbReference type="PDBsum" id="6VYR"/>
<dbReference type="PDBsum" id="6VYS"/>
<dbReference type="PDBsum" id="6VYT"/>
<dbReference type="PDBsum" id="6VYU"/>
<dbReference type="PDBsum" id="6VYW"/>
<dbReference type="PDBsum" id="6VYX"/>
<dbReference type="PDBsum" id="6VYY"/>
<dbReference type="PDBsum" id="6VYZ"/>
<dbReference type="PDBsum" id="6VZ2"/>
<dbReference type="PDBsum" id="6VZ3"/>
<dbReference type="PDBsum" id="6VZ5"/>
<dbReference type="PDBsum" id="6VZ7"/>
<dbReference type="PDBsum" id="6VZJ"/>
<dbReference type="PDBsum" id="6WD0"/>
<dbReference type="PDBsum" id="6WD1"/>
<dbReference type="PDBsum" id="6WD2"/>
<dbReference type="PDBsum" id="6WD3"/>
<dbReference type="PDBsum" id="6WD4"/>
<dbReference type="PDBsum" id="6WD5"/>
<dbReference type="PDBsum" id="6WD6"/>
<dbReference type="PDBsum" id="6WD7"/>
<dbReference type="PDBsum" id="6WD8"/>
<dbReference type="PDBsum" id="6WD9"/>
<dbReference type="PDBsum" id="6WDA"/>
<dbReference type="PDBsum" id="6WDB"/>
<dbReference type="PDBsum" id="6WDC"/>
<dbReference type="PDBsum" id="6WDD"/>
<dbReference type="PDBsum" id="6WDE"/>
<dbReference type="PDBsum" id="6WDF"/>
<dbReference type="PDBsum" id="6WDG"/>
<dbReference type="PDBsum" id="6WDH"/>
<dbReference type="PDBsum" id="6WDI"/>
<dbReference type="PDBsum" id="6WDJ"/>
<dbReference type="PDBsum" id="6WDK"/>
<dbReference type="PDBsum" id="6WDL"/>
<dbReference type="PDBsum" id="6WDM"/>
<dbReference type="PDBsum" id="6WNT"/>
<dbReference type="PDBsum" id="6WNV"/>
<dbReference type="PDBsum" id="6WNW"/>
<dbReference type="PDBsum" id="6X6T"/>
<dbReference type="PDBsum" id="6X7F"/>
<dbReference type="PDBsum" id="6X7K"/>
<dbReference type="PDBsum" id="6X9Q"/>
<dbReference type="PDBsum" id="6XDQ"/>
<dbReference type="PDBsum" id="6XDR"/>
<dbReference type="PDBsum" id="6XGF"/>
<dbReference type="PDBsum" id="6XII"/>
<dbReference type="PDBsum" id="6XIJ"/>
<dbReference type="PDBsum" id="6XZ7"/>
<dbReference type="PDBsum" id="6XZA"/>
<dbReference type="PDBsum" id="6XZB"/>
<dbReference type="PDBsum" id="6Y69"/>
<dbReference type="PDBsum" id="6YS3"/>
<dbReference type="PDBsum" id="6YSR"/>
<dbReference type="PDBsum" id="6YSS"/>
<dbReference type="PDBsum" id="6YST"/>
<dbReference type="PDBsum" id="6YSU"/>
<dbReference type="PDBsum" id="6ZTJ"/>
<dbReference type="PDBsum" id="6ZTL"/>
<dbReference type="PDBsum" id="6ZTM"/>
<dbReference type="PDBsum" id="6ZTN"/>
<dbReference type="PDBsum" id="6ZTO"/>
<dbReference type="PDBsum" id="6ZTP"/>
<dbReference type="PDBsum" id="6ZU1"/>
<dbReference type="PDBsum" id="7ABZ"/>
<dbReference type="PDBsum" id="7AC7"/>
<dbReference type="PDBsum" id="7ACJ"/>
<dbReference type="PDBsum" id="7ACR"/>
<dbReference type="PDBsum" id="7B5K"/>
<dbReference type="PDBsum" id="7BL4"/>
<dbReference type="PDBsum" id="7BL6"/>
<dbReference type="PDBsum" id="7BV8"/>
<dbReference type="PDBsum" id="7D6Z"/>
<dbReference type="PDBsum" id="7D80"/>
<dbReference type="PDBsum" id="7JSS"/>
<dbReference type="PDBsum" id="7JSW"/>
<dbReference type="PDBsum" id="7JSZ"/>
<dbReference type="PDBsum" id="7JT1"/>
<dbReference type="PDBsum" id="7JT2"/>
<dbReference type="PDBsum" id="7JT3"/>
<dbReference type="PDBsum" id="7K00"/>
<dbReference type="PDBsum" id="7K50"/>
<dbReference type="PDBsum" id="7K51"/>
<dbReference type="PDBsum" id="7K52"/>
<dbReference type="PDBsum" id="7K53"/>
<dbReference type="PDBsum" id="7K54"/>
<dbReference type="PDBsum" id="7K55"/>
<dbReference type="PDBsum" id="7LV0"/>
<dbReference type="PDBsum" id="7LVK"/>
<dbReference type="PDBsum" id="7M5D"/>
<dbReference type="PDBsum" id="7N1P"/>
<dbReference type="PDBsum" id="7N2C"/>
<dbReference type="PDBsum" id="7N2U"/>
<dbReference type="PDBsum" id="7N2V"/>
<dbReference type="PDBsum" id="7N30"/>
<dbReference type="PDBsum" id="7N31"/>
<dbReference type="PDBsum" id="7NBU"/>
<dbReference type="PDBsum" id="7NWT"/>
<dbReference type="PDBsum" id="7O19"/>
<dbReference type="PDBsum" id="7O1A"/>
<dbReference type="PDBsum" id="7O1C"/>
<dbReference type="PDBsum" id="7OIZ"/>
<dbReference type="PDBsum" id="7OJ0"/>
<dbReference type="PDBsum" id="7P3K"/>
<dbReference type="PDBsum" id="7PJS"/>
<dbReference type="PDBsum" id="7PJT"/>
<dbReference type="PDBsum" id="7PJU"/>
<dbReference type="PDBsum" id="7PJV"/>
<dbReference type="PDBsum" id="7PJW"/>
<dbReference type="PDBsum" id="7PJX"/>
<dbReference type="PDBsum" id="7PJY"/>
<dbReference type="PDBsum" id="7PJZ"/>
<dbReference type="PDBsum" id="7Q4K"/>
<dbReference type="PDBsum" id="7QG8"/>
<dbReference type="PDBsum" id="7QGN"/>
<dbReference type="PDBsum" id="7QGR"/>
<dbReference type="PDBsum" id="7QQ3"/>
<dbReference type="PDBsum" id="7S1G"/>
<dbReference type="PDBsum" id="7S1H"/>
<dbReference type="PDBsum" id="7S1I"/>
<dbReference type="PDBsum" id="7S1J"/>
<dbReference type="PDBsum" id="7S1K"/>
<dbReference type="PDBsum" id="7SA4"/>
<dbReference type="PDBsum" id="7SS9"/>
<dbReference type="PDBsum" id="7SSD"/>
<dbReference type="PDBsum" id="7SSL"/>
<dbReference type="PDBsum" id="7SSN"/>
<dbReference type="PDBsum" id="7SSO"/>
<dbReference type="PDBsum" id="7SSW"/>
<dbReference type="PDBsum" id="7ST2"/>
<dbReference type="PDBsum" id="7ST6"/>
<dbReference type="PDBsum" id="7ST7"/>
<dbReference type="PDBsum" id="7TOS"/>
<dbReference type="PDBsum" id="7UG7"/>
<dbReference type="PDBsum" id="7UPH"/>
<dbReference type="PDBsum" id="7Y7C"/>
<dbReference type="PDBsum" id="7Y7D"/>
<dbReference type="PDBsum" id="7Y7E"/>
<dbReference type="PDBsum" id="7Y7F"/>
<dbReference type="PDBsum" id="7Y7G"/>
<dbReference type="PDBsum" id="7Y7H"/>
<dbReference type="PDBsum" id="7YLA"/>
<dbReference type="PDBsum" id="7Z20"/>
<dbReference type="PDBsum" id="7ZOD"/>
<dbReference type="PDBsum" id="7ZP8"/>
<dbReference type="PDBsum" id="7ZQ5"/>
<dbReference type="PDBsum" id="7ZQ6"/>
<dbReference type="PDBsum" id="7ZTA"/>
<dbReference type="PDBsum" id="8A3L"/>
<dbReference type="PDBsum" id="8AKN"/>
<dbReference type="PDBsum" id="8AM9"/>
<dbReference type="PDBsum" id="8ANA"/>
<dbReference type="PDBsum" id="8AP4"/>
<dbReference type="PDBsum" id="8AYE"/>
<dbReference type="PDBsum" id="8B0X"/>
<dbReference type="PDBsum" id="8B7Y"/>
<dbReference type="PDBsum" id="8BF7"/>
<dbReference type="PDBsum" id="8BGE"/>
<dbReference type="PDBsum" id="8BGH"/>
<dbReference type="PDBsum" id="8BH4"/>
<dbReference type="PDBsum" id="8BHJ"/>
<dbReference type="PDBsum" id="8BHL"/>
<dbReference type="PDBsum" id="8BHN"/>
<dbReference type="PDBsum" id="8BHP"/>
<dbReference type="PDBsum" id="8BIL"/>
<dbReference type="PDBsum" id="8BIM"/>
<dbReference type="PDBsum" id="8C8X"/>
<dbReference type="PDBsum" id="8CAM"/>
<dbReference type="PDBsum" id="8CEU"/>
<dbReference type="PDBsum" id="8CGD"/>
<dbReference type="PDBsum" id="8CGK"/>
<dbReference type="PDBsum" id="8CGV"/>
<dbReference type="PDBsum" id="8EIU"/>
<dbReference type="PDBsum" id="8EKC"/>
<dbReference type="PDBsum" id="8EMM"/>
<dbReference type="PDBsum" id="8FIZ"/>
<dbReference type="PDBsum" id="8FTO"/>
<dbReference type="PDBsum" id="8FZD"/>
<dbReference type="PDBsum" id="8FZE"/>
<dbReference type="PDBsum" id="8FZF"/>
<dbReference type="PDBsum" id="8FZG"/>
<dbReference type="PDBsum" id="8FZH"/>
<dbReference type="PDBsum" id="8FZI"/>
<dbReference type="PDBsum" id="8FZJ"/>
<dbReference type="PDBsum" id="8G2U"/>
<dbReference type="PDBsum" id="8G31"/>
<dbReference type="PDBsum" id="8G34"/>
<dbReference type="PDBsum" id="8G38"/>
<dbReference type="PDBsum" id="8G6W"/>
<dbReference type="PDBsum" id="8G6X"/>
<dbReference type="PDBsum" id="8G6Y"/>
<dbReference type="PDBsum" id="8G7P"/>
<dbReference type="PDBsum" id="8G7Q"/>
<dbReference type="PDBsum" id="8G7R"/>
<dbReference type="PDBsum" id="8G7S"/>
<dbReference type="PDBsum" id="8HSP"/>
<dbReference type="PDBsum" id="8HTZ"/>
<dbReference type="PDBsum" id="8HU1"/>
<dbReference type="PDBsum" id="8IFB"/>
<dbReference type="PDBsum" id="8IFC"/>
<dbReference type="PDBsum" id="8J1Z"/>
<dbReference type="PDBsum" id="8P16"/>
<dbReference type="PDBsum" id="8P17"/>
<dbReference type="PDBsum" id="8P18"/>
<dbReference type="PDBsum" id="8PEG"/>
<dbReference type="PDBsum" id="8PHJ"/>
<dbReference type="PDBsum" id="8PKL"/>
<dbReference type="PDBsum" id="8PVA"/>
<dbReference type="PDBsum" id="8Q4F"/>
<dbReference type="PDBsum" id="8QBT"/>
<dbReference type="PDBsum" id="8QK7"/>
<dbReference type="PDBsum" id="8QOA"/>
<dbReference type="PDBsum" id="8R3V"/>
<dbReference type="PDBsum" id="8R6C"/>
<dbReference type="PDBsum" id="8R8M"/>
<dbReference type="PDBsum" id="8RCL"/>
<dbReference type="PDBsum" id="8RCM"/>
<dbReference type="PDBsum" id="8RCS"/>
<dbReference type="PDBsum" id="8RCT"/>
<dbReference type="PDBsum" id="8RPY"/>
<dbReference type="PDBsum" id="8RPZ"/>
<dbReference type="PDBsum" id="8RQ0"/>
<dbReference type="PDBsum" id="8RQ2"/>
<dbReference type="PDBsum" id="8SYL"/>
<dbReference type="PDBsum" id="8T5D"/>
<dbReference type="PDBsum" id="8T5H"/>
<dbReference type="PDBsum" id="8UPO"/>
<dbReference type="PDBsum" id="8UPR"/>
<dbReference type="PDBsum" id="8UQL"/>
<dbReference type="PDBsum" id="8UQM"/>
<dbReference type="PDBsum" id="8UQP"/>
<dbReference type="PDBsum" id="8UR0"/>
<dbReference type="PDBsum" id="8URH"/>
<dbReference type="PDBsum" id="8URI"/>
<dbReference type="PDBsum" id="8URX"/>
<dbReference type="PDBsum" id="8URY"/>
<dbReference type="PDBsum" id="8VS9"/>
<dbReference type="PDBsum" id="8VSA"/>
<dbReference type="PDBsum" id="8W51"/>
<dbReference type="PDBsum" id="8YUO"/>
<dbReference type="PDBsum" id="8YUP"/>
<dbReference type="PDBsum" id="8YUQ"/>
<dbReference type="PDBsum" id="8YUR"/>
<dbReference type="PDBsum" id="8YUS"/>
<dbReference type="PDBsum" id="9AX7"/>
<dbReference type="PDBsum" id="9CG5"/>
<dbReference type="PDBsum" id="9CG6"/>
<dbReference type="PDBsum" id="9CG7"/>
<dbReference type="PDBsum" id="9D89"/>
<dbReference type="PDBsum" id="9FBV"/>
<dbReference type="PDBsum" id="9GFT"/>
<dbReference type="PDBsum" id="9GGR"/>
<dbReference type="PDBsum" id="9H3X"/>
<dbReference type="PDBsum" id="9H3Y"/>
<dbReference type="PDBsum" id="9H3Z"/>
<dbReference type="PDBsum" id="9HA6"/>
<dbReference type="PDBsum" id="9MOR"/>
<dbReference type="PDBsum" id="9MQ4"/>
<dbReference type="EMDB" id="EMD-0076"/>
<dbReference type="EMDB" id="EMD-0080"/>
<dbReference type="EMDB" id="EMD-0081"/>
<dbReference type="EMDB" id="EMD-0082"/>
<dbReference type="EMDB" id="EMD-0083"/>
<dbReference type="EMDB" id="EMD-0137"/>
<dbReference type="EMDB" id="EMD-0139"/>
<dbReference type="EMDB" id="EMD-0261"/>
<dbReference type="EMDB" id="EMD-0322"/>
<dbReference type="EMDB" id="EMD-10073"/>
<dbReference type="EMDB" id="EMD-10353"/>
<dbReference type="EMDB" id="EMD-10453"/>
<dbReference type="EMDB" id="EMD-10458"/>
<dbReference type="EMDB" id="EMD-10655"/>
<dbReference type="EMDB" id="EMD-10656"/>
<dbReference type="EMDB" id="EMD-10657"/>
<dbReference type="EMDB" id="EMD-10705"/>
<dbReference type="EMDB" id="EMD-10905"/>
<dbReference type="EMDB" id="EMD-10906"/>
<dbReference type="EMDB" id="EMD-10907"/>
<dbReference type="EMDB" id="EMD-10908"/>
<dbReference type="EMDB" id="EMD-11418"/>
<dbReference type="EMDB" id="EMD-11419"/>
<dbReference type="EMDB" id="EMD-11420"/>
<dbReference type="EMDB" id="EMD-11421"/>
<dbReference type="EMDB" id="EMD-11422"/>
<dbReference type="EMDB" id="EMD-11423"/>
<dbReference type="EMDB" id="EMD-11426"/>
<dbReference type="EMDB" id="EMD-11710"/>
<dbReference type="EMDB" id="EMD-11713"/>
<dbReference type="EMDB" id="EMD-11717"/>
<dbReference type="EMDB" id="EMD-11718"/>
<dbReference type="EMDB" id="EMD-12035"/>
<dbReference type="EMDB" id="EMD-12217"/>
<dbReference type="EMDB" id="EMD-12219"/>
<dbReference type="EMDB" id="EMD-12261"/>
<dbReference type="EMDB" id="EMD-12635"/>
<dbReference type="EMDB" id="EMD-12693"/>
<dbReference type="EMDB" id="EMD-12694"/>
<dbReference type="EMDB" id="EMD-12695"/>
<dbReference type="EMDB" id="EMD-12936"/>
<dbReference type="EMDB" id="EMD-12937"/>
<dbReference type="EMDB" id="EMD-13180"/>
<dbReference type="EMDB" id="EMD-13458"/>
<dbReference type="EMDB" id="EMD-13459"/>
<dbReference type="EMDB" id="EMD-13460"/>
<dbReference type="EMDB" id="EMD-13461"/>
<dbReference type="EMDB" id="EMD-13462"/>
<dbReference type="EMDB" id="EMD-13463"/>
<dbReference type="EMDB" id="EMD-13464"/>
<dbReference type="EMDB" id="EMD-13465"/>
<dbReference type="EMDB" id="EMD-13805"/>
<dbReference type="EMDB" id="EMD-13952"/>
<dbReference type="EMDB" id="EMD-13956"/>
<dbReference type="EMDB" id="EMD-13958"/>
<dbReference type="EMDB" id="EMD-14121"/>
<dbReference type="EMDB" id="EMD-14454"/>
<dbReference type="EMDB" id="EMD-14846"/>
<dbReference type="EMDB" id="EMD-14850"/>
<dbReference type="EMDB" id="EMD-14864"/>
<dbReference type="EMDB" id="EMD-14865"/>
<dbReference type="EMDB" id="EMD-14956"/>
<dbReference type="EMDB" id="EMD-15116"/>
<dbReference type="EMDB" id="EMD-15558"/>
<dbReference type="EMDB" id="EMD-15712"/>
<dbReference type="EMDB" id="EMD-15793"/>
<dbReference type="EMDB" id="EMD-15905"/>
<dbReference type="EMDB" id="EMD-16015"/>
<dbReference type="EMDB" id="EMD-16029"/>
<dbReference type="EMDB" id="EMD-16031"/>
<dbReference type="EMDB" id="EMD-16047"/>
<dbReference type="EMDB" id="EMD-16057"/>
<dbReference type="EMDB" id="EMD-16059"/>
<dbReference type="EMDB" id="EMD-16062"/>
<dbReference type="EMDB" id="EMD-16065"/>
<dbReference type="EMDB" id="EMD-16081"/>
<dbReference type="EMDB" id="EMD-16082"/>
<dbReference type="EMDB" id="EMD-16494"/>
<dbReference type="EMDB" id="EMD-16530"/>
<dbReference type="EMDB" id="EMD-16613"/>
<dbReference type="EMDB" id="EMD-16641"/>
<dbReference type="EMDB" id="EMD-16646"/>
<dbReference type="EMDB" id="EMD-16652"/>
<dbReference type="EMDB" id="EMD-17346"/>
<dbReference type="EMDB" id="EMD-17347"/>
<dbReference type="EMDB" id="EMD-17348"/>
<dbReference type="EMDB" id="EMD-17631"/>
<dbReference type="EMDB" id="EMD-17667"/>
<dbReference type="EMDB" id="EMD-17743"/>
<dbReference type="EMDB" id="EMD-17959"/>
<dbReference type="EMDB" id="EMD-18145"/>
<dbReference type="EMDB" id="EMD-18320"/>
<dbReference type="EMDB" id="EMD-18458"/>
<dbReference type="EMDB" id="EMD-18534"/>
<dbReference type="EMDB" id="EMD-18875"/>
<dbReference type="EMDB" id="EMD-18950"/>
<dbReference type="EMDB" id="EMD-19004"/>
<dbReference type="EMDB" id="EMD-19054"/>
<dbReference type="EMDB" id="EMD-19055"/>
<dbReference type="EMDB" id="EMD-19058"/>
<dbReference type="EMDB" id="EMD-19059"/>
<dbReference type="EMDB" id="EMD-19426"/>
<dbReference type="EMDB" id="EMD-19427"/>
<dbReference type="EMDB" id="EMD-19428"/>
<dbReference type="EMDB" id="EMD-19429"/>
<dbReference type="EMDB" id="EMD-20048"/>
<dbReference type="EMDB" id="EMD-20052"/>
<dbReference type="EMDB" id="EMD-21420"/>
<dbReference type="EMDB" id="EMD-21421"/>
<dbReference type="EMDB" id="EMD-21422"/>
<dbReference type="EMDB" id="EMD-21620"/>
<dbReference type="EMDB" id="EMD-21625"/>
<dbReference type="EMDB" id="EMD-21630"/>
<dbReference type="EMDB" id="EMD-21631"/>
<dbReference type="EMDB" id="EMD-21632"/>
<dbReference type="EMDB" id="EMD-21633"/>
<dbReference type="EMDB" id="EMD-21634"/>
<dbReference type="EMDB" id="EMD-21635"/>
<dbReference type="EMDB" id="EMD-21636"/>
<dbReference type="EMDB" id="EMD-21637"/>
<dbReference type="EMDB" id="EMD-21638"/>
<dbReference type="EMDB" id="EMD-21639"/>
<dbReference type="EMDB" id="EMD-21640"/>
<dbReference type="EMDB" id="EMD-21641"/>
<dbReference type="EMDB" id="EMD-21856"/>
<dbReference type="EMDB" id="EMD-21857"/>
<dbReference type="EMDB" id="EMD-21858"/>
<dbReference type="EMDB" id="EMD-22459"/>
<dbReference type="EMDB" id="EMD-22461"/>
<dbReference type="EMDB" id="EMD-22464"/>
<dbReference type="EMDB" id="EMD-22466"/>
<dbReference type="EMDB" id="EMD-22469"/>
<dbReference type="EMDB" id="EMD-22472"/>
<dbReference type="EMDB" id="EMD-22669"/>
<dbReference type="EMDB" id="EMD-22670"/>
<dbReference type="EMDB" id="EMD-22671"/>
<dbReference type="EMDB" id="EMD-22672"/>
<dbReference type="EMDB" id="EMD-22673"/>
<dbReference type="EMDB" id="EMD-22674"/>
<dbReference type="EMDB" id="EMD-23528"/>
<dbReference type="EMDB" id="EMD-24120"/>
<dbReference type="EMDB" id="EMD-24132"/>
<dbReference type="EMDB" id="EMD-24133"/>
<dbReference type="EMDB" id="EMD-24134"/>
<dbReference type="EMDB" id="EMD-24135"/>
<dbReference type="EMDB" id="EMD-24136"/>
<dbReference type="EMDB" id="EMD-24803"/>
<dbReference type="EMDB" id="EMD-25405"/>
<dbReference type="EMDB" id="EMD-25407"/>
<dbReference type="EMDB" id="EMD-25409"/>
<dbReference type="EMDB" id="EMD-25410"/>
<dbReference type="EMDB" id="EMD-25411"/>
<dbReference type="EMDB" id="EMD-25415"/>
<dbReference type="EMDB" id="EMD-25418"/>
<dbReference type="EMDB" id="EMD-25420"/>
<dbReference type="EMDB" id="EMD-25421"/>
<dbReference type="EMDB" id="EMD-26486"/>
<dbReference type="EMDB" id="EMD-28165"/>
<dbReference type="EMDB" id="EMD-28197"/>
<dbReference type="EMDB" id="EMD-28254"/>
<dbReference type="EMDB" id="EMD-29214"/>
<dbReference type="EMDB" id="EMD-29449"/>
<dbReference type="EMDB" id="EMD-29620"/>
<dbReference type="EMDB" id="EMD-29621"/>
<dbReference type="EMDB" id="EMD-29624"/>
<dbReference type="EMDB" id="EMD-29627"/>
<dbReference type="EMDB" id="EMD-29628"/>
<dbReference type="EMDB" id="EMD-29631"/>
<dbReference type="EMDB" id="EMD-29634"/>
<dbReference type="EMDB" id="EMD-29786"/>
<dbReference type="EMDB" id="EMD-29787"/>
<dbReference type="EMDB" id="EMD-29788"/>
<dbReference type="EMDB" id="EMD-29819"/>
<dbReference type="EMDB" id="EMD-29820"/>
<dbReference type="EMDB" id="EMD-29821"/>
<dbReference type="EMDB" id="EMD-29822"/>
<dbReference type="EMDB" id="EMD-30215"/>
<dbReference type="EMDB" id="EMD-30598"/>
<dbReference type="EMDB" id="EMD-30611"/>
<dbReference type="EMDB" id="EMD-33660"/>
<dbReference type="EMDB" id="EMD-33661"/>
<dbReference type="EMDB" id="EMD-33662"/>
<dbReference type="EMDB" id="EMD-33663"/>
<dbReference type="EMDB" id="EMD-33664"/>
<dbReference type="EMDB" id="EMD-33665"/>
<dbReference type="EMDB" id="EMD-33904"/>
<dbReference type="EMDB" id="EMD-3489"/>
<dbReference type="EMDB" id="EMD-3490"/>
<dbReference type="EMDB" id="EMD-3492"/>
<dbReference type="EMDB" id="EMD-3493"/>
<dbReference type="EMDB" id="EMD-35001"/>
<dbReference type="EMDB" id="EMD-35020"/>
<dbReference type="EMDB" id="EMD-35022"/>
<dbReference type="EMDB" id="EMD-3508"/>
<dbReference type="EMDB" id="EMD-35411"/>
<dbReference type="EMDB" id="EMD-35412"/>
<dbReference type="EMDB" id="EMD-35939"/>
<dbReference type="EMDB" id="EMD-3617"/>
<dbReference type="EMDB" id="EMD-3713"/>
<dbReference type="EMDB" id="EMD-37271"/>
<dbReference type="EMDB" id="EMD-3730"/>
<dbReference type="EMDB" id="EMD-3898"/>
<dbReference type="EMDB" id="EMD-3899"/>
<dbReference type="EMDB" id="EMD-3903"/>
<dbReference type="EMDB" id="EMD-39577"/>
<dbReference type="EMDB" id="EMD-39578"/>
<dbReference type="EMDB" id="EMD-39579"/>
<dbReference type="EMDB" id="EMD-39580"/>
<dbReference type="EMDB" id="EMD-39581"/>
<dbReference type="EMDB" id="EMD-4001"/>
<dbReference type="EMDB" id="EMD-40882"/>
<dbReference type="EMDB" id="EMD-4121"/>
<dbReference type="EMDB" id="EMD-4122"/>
<dbReference type="EMDB" id="EMD-4123"/>
<dbReference type="EMDB" id="EMD-4124"/>
<dbReference type="EMDB" id="EMD-4125"/>
<dbReference type="EMDB" id="EMD-4126"/>
<dbReference type="EMDB" id="EMD-42453"/>
<dbReference type="EMDB" id="EMD-42454"/>
<dbReference type="EMDB" id="EMD-42473"/>
<dbReference type="EMDB" id="EMD-42474"/>
<dbReference type="EMDB" id="EMD-42477"/>
<dbReference type="EMDB" id="EMD-42479"/>
<dbReference type="EMDB" id="EMD-42492"/>
<dbReference type="EMDB" id="EMD-42493"/>
<dbReference type="EMDB" id="EMD-42503"/>
<dbReference type="EMDB" id="EMD-43490"/>
<dbReference type="EMDB" id="EMD-43491"/>
<dbReference type="EMDB" id="EMD-4378"/>
<dbReference type="EMDB" id="EMD-4379"/>
<dbReference type="EMDB" id="EMD-4383"/>
<dbReference type="EMDB" id="EMD-43929"/>
<dbReference type="EMDB" id="EMD-4476"/>
<dbReference type="EMDB" id="EMD-4477"/>
<dbReference type="EMDB" id="EMD-4478"/>
<dbReference type="EMDB" id="EMD-45569"/>
<dbReference type="EMDB" id="EMD-45572"/>
<dbReference type="EMDB" id="EMD-45573"/>
<dbReference type="EMDB" id="EMD-4638"/>
<dbReference type="EMDB" id="EMD-46632"/>
<dbReference type="EMDB" id="EMD-48479"/>
<dbReference type="EMDB" id="EMD-48513"/>
<dbReference type="EMDB" id="EMD-50296"/>
<dbReference type="EMDB" id="EMD-51318"/>
<dbReference type="EMDB" id="EMD-51340"/>
<dbReference type="EMDB" id="EMD-51841"/>
<dbReference type="EMDB" id="EMD-51842"/>
<dbReference type="EMDB" id="EMD-51843"/>
<dbReference type="EMDB" id="EMD-51978"/>
<dbReference type="EMDB" id="EMD-6667"/>
<dbReference type="EMDB" id="EMD-7289"/>
<dbReference type="EMDB" id="EMD-7341"/>
<dbReference type="EMDB" id="EMD-8000"/>
<dbReference type="EMDB" id="EMD-8001"/>
<dbReference type="EMDB" id="EMD-8002"/>
<dbReference type="EMDB" id="EMD-8003"/>
<dbReference type="EMDB" id="EMD-8004"/>
<dbReference type="EMDB" id="EMD-8107"/>
<dbReference type="EMDB" id="EMD-8175"/>
<dbReference type="EMDB" id="EMD-8176"/>
<dbReference type="EMDB" id="EMD-8237"/>
<dbReference type="EMDB" id="EMD-8238"/>
<dbReference type="EMDB" id="EMD-8279"/>
<dbReference type="EMDB" id="EMD-8280"/>
<dbReference type="EMDB" id="EMD-8281"/>
<dbReference type="EMDB" id="EMD-8282"/>
<dbReference type="EMDB" id="EMD-8505"/>
<dbReference type="EMDB" id="EMD-8615"/>
<dbReference type="EMDB" id="EMD-8616"/>
<dbReference type="EMDB" id="EMD-8617"/>
<dbReference type="EMDB" id="EMD-8618"/>
<dbReference type="EMDB" id="EMD-8619"/>
<dbReference type="EMDB" id="EMD-8620"/>
<dbReference type="EMDB" id="EMD-8813"/>
<dbReference type="EMDB" id="EMD-8814"/>
<dbReference type="EMDB" id="EMD-8815"/>
<dbReference type="EMDB" id="EMD-8828"/>
<dbReference type="SMR" id="P0A7Q1"/>
<dbReference type="BioGRID" id="4262931">
    <property type="interactions" value="90"/>
</dbReference>
<dbReference type="BioGRID" id="850706">
    <property type="interactions" value="3"/>
</dbReference>
<dbReference type="ComplexPortal" id="CPX-3807">
    <property type="entry name" value="50S large ribosomal subunit"/>
</dbReference>
<dbReference type="FunCoup" id="P0A7Q1">
    <property type="interactions" value="468"/>
</dbReference>
<dbReference type="IntAct" id="P0A7Q1">
    <property type="interactions" value="17"/>
</dbReference>
<dbReference type="STRING" id="511145.b1717"/>
<dbReference type="jPOST" id="P0A7Q1"/>
<dbReference type="PaxDb" id="511145-b1717"/>
<dbReference type="EnsemblBacteria" id="AAC74787">
    <property type="protein sequence ID" value="AAC74787"/>
    <property type="gene ID" value="b1717"/>
</dbReference>
<dbReference type="GeneID" id="946349"/>
<dbReference type="GeneID" id="97601348"/>
<dbReference type="KEGG" id="ecj:JW1707"/>
<dbReference type="KEGG" id="eco:b1717"/>
<dbReference type="KEGG" id="ecoc:C3026_09825"/>
<dbReference type="PATRIC" id="fig|1411691.4.peg.540"/>
<dbReference type="EchoBASE" id="EB1213"/>
<dbReference type="eggNOG" id="COG0291">
    <property type="taxonomic scope" value="Bacteria"/>
</dbReference>
<dbReference type="HOGENOM" id="CLU_169643_1_1_6"/>
<dbReference type="InParanoid" id="P0A7Q1"/>
<dbReference type="OMA" id="PKIKTHR"/>
<dbReference type="OrthoDB" id="47476at2"/>
<dbReference type="PhylomeDB" id="P0A7Q1"/>
<dbReference type="BioCyc" id="EcoCyc:EG11231-MONOMER"/>
<dbReference type="BioCyc" id="MetaCyc:EG11231-MONOMER"/>
<dbReference type="EvolutionaryTrace" id="P0A7Q1"/>
<dbReference type="PRO" id="PR:P0A7Q1"/>
<dbReference type="Proteomes" id="UP000000625">
    <property type="component" value="Chromosome"/>
</dbReference>
<dbReference type="GO" id="GO:0005737">
    <property type="term" value="C:cytoplasm"/>
    <property type="evidence" value="ECO:0000314"/>
    <property type="project" value="ComplexPortal"/>
</dbReference>
<dbReference type="GO" id="GO:0022625">
    <property type="term" value="C:cytosolic large ribosomal subunit"/>
    <property type="evidence" value="ECO:0000314"/>
    <property type="project" value="EcoCyc"/>
</dbReference>
<dbReference type="GO" id="GO:0003735">
    <property type="term" value="F:structural constituent of ribosome"/>
    <property type="evidence" value="ECO:0000314"/>
    <property type="project" value="EcoCyc"/>
</dbReference>
<dbReference type="GO" id="GO:0002181">
    <property type="term" value="P:cytoplasmic translation"/>
    <property type="evidence" value="ECO:0000303"/>
    <property type="project" value="ComplexPortal"/>
</dbReference>
<dbReference type="FunFam" id="4.10.410.60:FF:000001">
    <property type="entry name" value="50S ribosomal protein L35"/>
    <property type="match status" value="1"/>
</dbReference>
<dbReference type="Gene3D" id="4.10.410.60">
    <property type="match status" value="1"/>
</dbReference>
<dbReference type="HAMAP" id="MF_00514">
    <property type="entry name" value="Ribosomal_bL35"/>
    <property type="match status" value="1"/>
</dbReference>
<dbReference type="InterPro" id="IPR001706">
    <property type="entry name" value="Ribosomal_bL35"/>
</dbReference>
<dbReference type="InterPro" id="IPR021137">
    <property type="entry name" value="Ribosomal_bL35-like"/>
</dbReference>
<dbReference type="InterPro" id="IPR018265">
    <property type="entry name" value="Ribosomal_bL35_CS"/>
</dbReference>
<dbReference type="InterPro" id="IPR037229">
    <property type="entry name" value="Ribosomal_bL35_sf"/>
</dbReference>
<dbReference type="NCBIfam" id="TIGR00001">
    <property type="entry name" value="rpmI_bact"/>
    <property type="match status" value="1"/>
</dbReference>
<dbReference type="PANTHER" id="PTHR33343">
    <property type="entry name" value="54S RIBOSOMAL PROTEIN BL35M"/>
    <property type="match status" value="1"/>
</dbReference>
<dbReference type="PANTHER" id="PTHR33343:SF1">
    <property type="entry name" value="LARGE RIBOSOMAL SUBUNIT PROTEIN BL35M"/>
    <property type="match status" value="1"/>
</dbReference>
<dbReference type="Pfam" id="PF01632">
    <property type="entry name" value="Ribosomal_L35p"/>
    <property type="match status" value="1"/>
</dbReference>
<dbReference type="PRINTS" id="PR00064">
    <property type="entry name" value="RIBOSOMALL35"/>
</dbReference>
<dbReference type="SUPFAM" id="SSF143034">
    <property type="entry name" value="L35p-like"/>
    <property type="match status" value="1"/>
</dbReference>
<dbReference type="PROSITE" id="PS00936">
    <property type="entry name" value="RIBOSOMAL_L35"/>
    <property type="match status" value="1"/>
</dbReference>
<evidence type="ECO:0000256" key="1">
    <source>
        <dbReference type="SAM" id="MobiDB-lite"/>
    </source>
</evidence>
<evidence type="ECO:0000269" key="2">
    <source>
    </source>
</evidence>
<evidence type="ECO:0000269" key="3">
    <source>
    </source>
</evidence>
<evidence type="ECO:0000269" key="4">
    <source>
    </source>
</evidence>
<evidence type="ECO:0000269" key="5">
    <source>
    </source>
</evidence>
<evidence type="ECO:0000269" key="6">
    <source>
    </source>
</evidence>
<evidence type="ECO:0000269" key="7">
    <source>
    </source>
</evidence>
<evidence type="ECO:0000269" key="8">
    <source>
    </source>
</evidence>
<evidence type="ECO:0000269" key="9">
    <source>
    </source>
</evidence>
<evidence type="ECO:0000269" key="10">
    <source>
    </source>
</evidence>
<evidence type="ECO:0000303" key="11">
    <source>
    </source>
</evidence>
<evidence type="ECO:0000305" key="12"/>
<evidence type="ECO:0007829" key="13">
    <source>
        <dbReference type="PDB" id="6YS3"/>
    </source>
</evidence>
<evidence type="ECO:0007829" key="14">
    <source>
        <dbReference type="PDB" id="7BL4"/>
    </source>
</evidence>
<evidence type="ECO:0007829" key="15">
    <source>
        <dbReference type="PDB" id="7QQ3"/>
    </source>
</evidence>
<evidence type="ECO:0007829" key="16">
    <source>
        <dbReference type="PDB" id="8CGD"/>
    </source>
</evidence>
<evidence type="ECO:0007829" key="17">
    <source>
        <dbReference type="PDB" id="8CGK"/>
    </source>
</evidence>
<comment type="subunit">
    <text evidence="2 3 4 5 6 7 8 9 10">Part of the 50S ribosomal subunit.</text>
</comment>
<comment type="mass spectrometry" mass="7158.0" method="MALDI" evidence="2"/>
<comment type="similarity">
    <text evidence="12">Belongs to the bacterial ribosomal protein bL35 family.</text>
</comment>
<comment type="sequence caution" evidence="12">
    <conflict type="frameshift">
        <sequence resource="EMBL" id="V00291"/>
    </conflict>
</comment>
<organism>
    <name type="scientific">Escherichia coli (strain K12)</name>
    <dbReference type="NCBI Taxonomy" id="83333"/>
    <lineage>
        <taxon>Bacteria</taxon>
        <taxon>Pseudomonadati</taxon>
        <taxon>Pseudomonadota</taxon>
        <taxon>Gammaproteobacteria</taxon>
        <taxon>Enterobacterales</taxon>
        <taxon>Enterobacteriaceae</taxon>
        <taxon>Escherichia</taxon>
    </lineage>
</organism>
<gene>
    <name type="primary">rpmI</name>
    <name type="ordered locus">b1717</name>
    <name type="ordered locus">JW1707</name>
</gene>
<protein>
    <recommendedName>
        <fullName evidence="11">Large ribosomal subunit protein bL35</fullName>
    </recommendedName>
    <alternativeName>
        <fullName>50S ribosomal protein L35</fullName>
    </alternativeName>
    <alternativeName>
        <fullName>Ribosomal protein A</fullName>
    </alternativeName>
</protein>
<sequence length="65" mass="7289">MPKIKTVRGAAKRFKKTGKGGFKHKHANLRHILTKKATKRKRHLRPKAMVSKGDLGLVIACLPYA</sequence>
<proteinExistence type="evidence at protein level"/>
<accession>P0A7Q1</accession>
<accession>P07085</accession>
<accession>P78275</accession>